<reference key="1">
    <citation type="journal article" date="1996" name="Proc. Natl. Acad. Sci. U.S.A.">
        <title>Transcriptional repression by YY1 is mediated by interaction with a mammalian homolog of the yeast global regulator RPD3.</title>
        <authorList>
            <person name="Yang W.-M."/>
            <person name="Inouye C.J."/>
            <person name="Zeng Y."/>
            <person name="Bearss D."/>
            <person name="Seto E."/>
        </authorList>
    </citation>
    <scope>NUCLEOTIDE SEQUENCE [MRNA] (ISOFORM 1)</scope>
    <scope>INTERACTION WITH YY1</scope>
    <scope>VARIANT CYS-230</scope>
    <source>
        <tissue>Mammary gland</tissue>
    </source>
</reference>
<reference key="2">
    <citation type="journal article" date="2004" name="Nat. Genet.">
        <title>Complete sequencing and characterization of 21,243 full-length human cDNAs.</title>
        <authorList>
            <person name="Ota T."/>
            <person name="Suzuki Y."/>
            <person name="Nishikawa T."/>
            <person name="Otsuki T."/>
            <person name="Sugiyama T."/>
            <person name="Irie R."/>
            <person name="Wakamatsu A."/>
            <person name="Hayashi K."/>
            <person name="Sato H."/>
            <person name="Nagai K."/>
            <person name="Kimura K."/>
            <person name="Makita H."/>
            <person name="Sekine M."/>
            <person name="Obayashi M."/>
            <person name="Nishi T."/>
            <person name="Shibahara T."/>
            <person name="Tanaka T."/>
            <person name="Ishii S."/>
            <person name="Yamamoto J."/>
            <person name="Saito K."/>
            <person name="Kawai Y."/>
            <person name="Isono Y."/>
            <person name="Nakamura Y."/>
            <person name="Nagahari K."/>
            <person name="Murakami K."/>
            <person name="Yasuda T."/>
            <person name="Iwayanagi T."/>
            <person name="Wagatsuma M."/>
            <person name="Shiratori A."/>
            <person name="Sudo H."/>
            <person name="Hosoiri T."/>
            <person name="Kaku Y."/>
            <person name="Kodaira H."/>
            <person name="Kondo H."/>
            <person name="Sugawara M."/>
            <person name="Takahashi M."/>
            <person name="Kanda K."/>
            <person name="Yokoi T."/>
            <person name="Furuya T."/>
            <person name="Kikkawa E."/>
            <person name="Omura Y."/>
            <person name="Abe K."/>
            <person name="Kamihara K."/>
            <person name="Katsuta N."/>
            <person name="Sato K."/>
            <person name="Tanikawa M."/>
            <person name="Yamazaki M."/>
            <person name="Ninomiya K."/>
            <person name="Ishibashi T."/>
            <person name="Yamashita H."/>
            <person name="Murakawa K."/>
            <person name="Fujimori K."/>
            <person name="Tanai H."/>
            <person name="Kimata M."/>
            <person name="Watanabe M."/>
            <person name="Hiraoka S."/>
            <person name="Chiba Y."/>
            <person name="Ishida S."/>
            <person name="Ono Y."/>
            <person name="Takiguchi S."/>
            <person name="Watanabe S."/>
            <person name="Yosida M."/>
            <person name="Hotuta T."/>
            <person name="Kusano J."/>
            <person name="Kanehori K."/>
            <person name="Takahashi-Fujii A."/>
            <person name="Hara H."/>
            <person name="Tanase T.-O."/>
            <person name="Nomura Y."/>
            <person name="Togiya S."/>
            <person name="Komai F."/>
            <person name="Hara R."/>
            <person name="Takeuchi K."/>
            <person name="Arita M."/>
            <person name="Imose N."/>
            <person name="Musashino K."/>
            <person name="Yuuki H."/>
            <person name="Oshima A."/>
            <person name="Sasaki N."/>
            <person name="Aotsuka S."/>
            <person name="Yoshikawa Y."/>
            <person name="Matsunawa H."/>
            <person name="Ichihara T."/>
            <person name="Shiohata N."/>
            <person name="Sano S."/>
            <person name="Moriya S."/>
            <person name="Momiyama H."/>
            <person name="Satoh N."/>
            <person name="Takami S."/>
            <person name="Terashima Y."/>
            <person name="Suzuki O."/>
            <person name="Nakagawa S."/>
            <person name="Senoh A."/>
            <person name="Mizoguchi H."/>
            <person name="Goto Y."/>
            <person name="Shimizu F."/>
            <person name="Wakebe H."/>
            <person name="Hishigaki H."/>
            <person name="Watanabe T."/>
            <person name="Sugiyama A."/>
            <person name="Takemoto M."/>
            <person name="Kawakami B."/>
            <person name="Yamazaki M."/>
            <person name="Watanabe K."/>
            <person name="Kumagai A."/>
            <person name="Itakura S."/>
            <person name="Fukuzumi Y."/>
            <person name="Fujimori Y."/>
            <person name="Komiyama M."/>
            <person name="Tashiro H."/>
            <person name="Tanigami A."/>
            <person name="Fujiwara T."/>
            <person name="Ono T."/>
            <person name="Yamada K."/>
            <person name="Fujii Y."/>
            <person name="Ozaki K."/>
            <person name="Hirao M."/>
            <person name="Ohmori Y."/>
            <person name="Kawabata A."/>
            <person name="Hikiji T."/>
            <person name="Kobatake N."/>
            <person name="Inagaki H."/>
            <person name="Ikema Y."/>
            <person name="Okamoto S."/>
            <person name="Okitani R."/>
            <person name="Kawakami T."/>
            <person name="Noguchi S."/>
            <person name="Itoh T."/>
            <person name="Shigeta K."/>
            <person name="Senba T."/>
            <person name="Matsumura K."/>
            <person name="Nakajima Y."/>
            <person name="Mizuno T."/>
            <person name="Morinaga M."/>
            <person name="Sasaki M."/>
            <person name="Togashi T."/>
            <person name="Oyama M."/>
            <person name="Hata H."/>
            <person name="Watanabe M."/>
            <person name="Komatsu T."/>
            <person name="Mizushima-Sugano J."/>
            <person name="Satoh T."/>
            <person name="Shirai Y."/>
            <person name="Takahashi Y."/>
            <person name="Nakagawa K."/>
            <person name="Okumura K."/>
            <person name="Nagase T."/>
            <person name="Nomura N."/>
            <person name="Kikuchi H."/>
            <person name="Masuho Y."/>
            <person name="Yamashita R."/>
            <person name="Nakai K."/>
            <person name="Yada T."/>
            <person name="Nakamura Y."/>
            <person name="Ohara O."/>
            <person name="Isogai T."/>
            <person name="Sugano S."/>
        </authorList>
    </citation>
    <scope>NUCLEOTIDE SEQUENCE [LARGE SCALE MRNA] (ISOFORMS 1 AND 2)</scope>
    <source>
        <tissue>Tongue</tissue>
    </source>
</reference>
<reference key="3">
    <citation type="journal article" date="2003" name="Nature">
        <title>The DNA sequence and analysis of human chromosome 6.</title>
        <authorList>
            <person name="Mungall A.J."/>
            <person name="Palmer S.A."/>
            <person name="Sims S.K."/>
            <person name="Edwards C.A."/>
            <person name="Ashurst J.L."/>
            <person name="Wilming L."/>
            <person name="Jones M.C."/>
            <person name="Horton R."/>
            <person name="Hunt S.E."/>
            <person name="Scott C.E."/>
            <person name="Gilbert J.G.R."/>
            <person name="Clamp M.E."/>
            <person name="Bethel G."/>
            <person name="Milne S."/>
            <person name="Ainscough R."/>
            <person name="Almeida J.P."/>
            <person name="Ambrose K.D."/>
            <person name="Andrews T.D."/>
            <person name="Ashwell R.I.S."/>
            <person name="Babbage A.K."/>
            <person name="Bagguley C.L."/>
            <person name="Bailey J."/>
            <person name="Banerjee R."/>
            <person name="Barker D.J."/>
            <person name="Barlow K.F."/>
            <person name="Bates K."/>
            <person name="Beare D.M."/>
            <person name="Beasley H."/>
            <person name="Beasley O."/>
            <person name="Bird C.P."/>
            <person name="Blakey S.E."/>
            <person name="Bray-Allen S."/>
            <person name="Brook J."/>
            <person name="Brown A.J."/>
            <person name="Brown J.Y."/>
            <person name="Burford D.C."/>
            <person name="Burrill W."/>
            <person name="Burton J."/>
            <person name="Carder C."/>
            <person name="Carter N.P."/>
            <person name="Chapman J.C."/>
            <person name="Clark S.Y."/>
            <person name="Clark G."/>
            <person name="Clee C.M."/>
            <person name="Clegg S."/>
            <person name="Cobley V."/>
            <person name="Collier R.E."/>
            <person name="Collins J.E."/>
            <person name="Colman L.K."/>
            <person name="Corby N.R."/>
            <person name="Coville G.J."/>
            <person name="Culley K.M."/>
            <person name="Dhami P."/>
            <person name="Davies J."/>
            <person name="Dunn M."/>
            <person name="Earthrowl M.E."/>
            <person name="Ellington A.E."/>
            <person name="Evans K.A."/>
            <person name="Faulkner L."/>
            <person name="Francis M.D."/>
            <person name="Frankish A."/>
            <person name="Frankland J."/>
            <person name="French L."/>
            <person name="Garner P."/>
            <person name="Garnett J."/>
            <person name="Ghori M.J."/>
            <person name="Gilby L.M."/>
            <person name="Gillson C.J."/>
            <person name="Glithero R.J."/>
            <person name="Grafham D.V."/>
            <person name="Grant M."/>
            <person name="Gribble S."/>
            <person name="Griffiths C."/>
            <person name="Griffiths M.N.D."/>
            <person name="Hall R."/>
            <person name="Halls K.S."/>
            <person name="Hammond S."/>
            <person name="Harley J.L."/>
            <person name="Hart E.A."/>
            <person name="Heath P.D."/>
            <person name="Heathcott R."/>
            <person name="Holmes S.J."/>
            <person name="Howden P.J."/>
            <person name="Howe K.L."/>
            <person name="Howell G.R."/>
            <person name="Huckle E."/>
            <person name="Humphray S.J."/>
            <person name="Humphries M.D."/>
            <person name="Hunt A.R."/>
            <person name="Johnson C.M."/>
            <person name="Joy A.A."/>
            <person name="Kay M."/>
            <person name="Keenan S.J."/>
            <person name="Kimberley A.M."/>
            <person name="King A."/>
            <person name="Laird G.K."/>
            <person name="Langford C."/>
            <person name="Lawlor S."/>
            <person name="Leongamornlert D.A."/>
            <person name="Leversha M."/>
            <person name="Lloyd C.R."/>
            <person name="Lloyd D.M."/>
            <person name="Loveland J.E."/>
            <person name="Lovell J."/>
            <person name="Martin S."/>
            <person name="Mashreghi-Mohammadi M."/>
            <person name="Maslen G.L."/>
            <person name="Matthews L."/>
            <person name="McCann O.T."/>
            <person name="McLaren S.J."/>
            <person name="McLay K."/>
            <person name="McMurray A."/>
            <person name="Moore M.J.F."/>
            <person name="Mullikin J.C."/>
            <person name="Niblett D."/>
            <person name="Nickerson T."/>
            <person name="Novik K.L."/>
            <person name="Oliver K."/>
            <person name="Overton-Larty E.K."/>
            <person name="Parker A."/>
            <person name="Patel R."/>
            <person name="Pearce A.V."/>
            <person name="Peck A.I."/>
            <person name="Phillimore B.J.C.T."/>
            <person name="Phillips S."/>
            <person name="Plumb R.W."/>
            <person name="Porter K.M."/>
            <person name="Ramsey Y."/>
            <person name="Ranby S.A."/>
            <person name="Rice C.M."/>
            <person name="Ross M.T."/>
            <person name="Searle S.M."/>
            <person name="Sehra H.K."/>
            <person name="Sheridan E."/>
            <person name="Skuce C.D."/>
            <person name="Smith S."/>
            <person name="Smith M."/>
            <person name="Spraggon L."/>
            <person name="Squares S.L."/>
            <person name="Steward C.A."/>
            <person name="Sycamore N."/>
            <person name="Tamlyn-Hall G."/>
            <person name="Tester J."/>
            <person name="Theaker A.J."/>
            <person name="Thomas D.W."/>
            <person name="Thorpe A."/>
            <person name="Tracey A."/>
            <person name="Tromans A."/>
            <person name="Tubby B."/>
            <person name="Wall M."/>
            <person name="Wallis J.M."/>
            <person name="West A.P."/>
            <person name="White S.S."/>
            <person name="Whitehead S.L."/>
            <person name="Whittaker H."/>
            <person name="Wild A."/>
            <person name="Willey D.J."/>
            <person name="Wilmer T.E."/>
            <person name="Wood J.M."/>
            <person name="Wray P.W."/>
            <person name="Wyatt J.C."/>
            <person name="Young L."/>
            <person name="Younger R.M."/>
            <person name="Bentley D.R."/>
            <person name="Coulson A."/>
            <person name="Durbin R.M."/>
            <person name="Hubbard T."/>
            <person name="Sulston J.E."/>
            <person name="Dunham I."/>
            <person name="Rogers J."/>
            <person name="Beck S."/>
        </authorList>
    </citation>
    <scope>NUCLEOTIDE SEQUENCE [LARGE SCALE GENOMIC DNA]</scope>
</reference>
<reference key="4">
    <citation type="submission" date="2005-09" db="EMBL/GenBank/DDBJ databases">
        <authorList>
            <person name="Mural R.J."/>
            <person name="Istrail S."/>
            <person name="Sutton G.G."/>
            <person name="Florea L."/>
            <person name="Halpern A.L."/>
            <person name="Mobarry C.M."/>
            <person name="Lippert R."/>
            <person name="Walenz B."/>
            <person name="Shatkay H."/>
            <person name="Dew I."/>
            <person name="Miller J.R."/>
            <person name="Flanigan M.J."/>
            <person name="Edwards N.J."/>
            <person name="Bolanos R."/>
            <person name="Fasulo D."/>
            <person name="Halldorsson B.V."/>
            <person name="Hannenhalli S."/>
            <person name="Turner R."/>
            <person name="Yooseph S."/>
            <person name="Lu F."/>
            <person name="Nusskern D.R."/>
            <person name="Shue B.C."/>
            <person name="Zheng X.H."/>
            <person name="Zhong F."/>
            <person name="Delcher A.L."/>
            <person name="Huson D.H."/>
            <person name="Kravitz S.A."/>
            <person name="Mouchard L."/>
            <person name="Reinert K."/>
            <person name="Remington K.A."/>
            <person name="Clark A.G."/>
            <person name="Waterman M.S."/>
            <person name="Eichler E.E."/>
            <person name="Adams M.D."/>
            <person name="Hunkapiller M.W."/>
            <person name="Myers E.W."/>
            <person name="Venter J.C."/>
        </authorList>
    </citation>
    <scope>NUCLEOTIDE SEQUENCE [LARGE SCALE GENOMIC DNA]</scope>
</reference>
<reference key="5">
    <citation type="journal article" date="2004" name="Genome Res.">
        <title>The status, quality, and expansion of the NIH full-length cDNA project: the Mammalian Gene Collection (MGC).</title>
        <authorList>
            <consortium name="The MGC Project Team"/>
        </authorList>
    </citation>
    <scope>NUCLEOTIDE SEQUENCE [LARGE SCALE MRNA] (ISOFORM 1)</scope>
    <scope>VARIANT HIS-315</scope>
    <source>
        <tissue>Testis</tissue>
    </source>
</reference>
<reference key="6">
    <citation type="journal article" date="1999" name="Biochemistry">
        <title>Molecular association between ATR and two components of the nucleosome remodeling and deacetylating complex, HDAC2 and CHD4.</title>
        <authorList>
            <person name="Schmidt D.R."/>
            <person name="Schreiber S.L."/>
        </authorList>
    </citation>
    <scope>INTERACTION WITH ATR</scope>
    <scope>IDENTIFICATION IN A COMPLEX CONTAINING ATR AND CHD4</scope>
</reference>
<reference key="7">
    <citation type="journal article" date="2000" name="J. Virol.">
        <title>A role for SKIP in EBNA2 activation of CBF1-repressed promoters.</title>
        <authorList>
            <person name="Zhou S."/>
            <person name="Fujimuro M."/>
            <person name="Hsieh J.J."/>
            <person name="Chen L."/>
            <person name="Hayward S.D."/>
        </authorList>
    </citation>
    <scope>INTERACTION WITH SNW1</scope>
</reference>
<reference key="8">
    <citation type="journal article" date="2000" name="Nat. Genet.">
        <title>DNMT1 binds HDAC2 and a new co-repressor, DMAP1, to form a complex at replication foci.</title>
        <authorList>
            <person name="Rountree M.R."/>
            <person name="Bachman K.E."/>
            <person name="Baylin S.B."/>
        </authorList>
    </citation>
    <scope>INTERACTION WITH DNMT1 AND DMAP1</scope>
</reference>
<reference key="9">
    <citation type="journal article" date="2000" name="Trends Genet.">
        <title>NuRD and SIN3 histone deacetylase complexes in development.</title>
        <authorList>
            <person name="Ahringer J."/>
        </authorList>
    </citation>
    <scope>REVIEW ON DEACETYLASE COMPLEXES</scope>
</reference>
<reference key="10">
    <citation type="journal article" date="2001" name="Genes Dev.">
        <title>Sharp, an inducible cofactor that integrates nuclear receptor repression and activation.</title>
        <authorList>
            <person name="Shi Y."/>
            <person name="Downes M."/>
            <person name="Xie W."/>
            <person name="Kao H.-Y."/>
            <person name="Ordentlich P."/>
            <person name="Tsai C.-C."/>
            <person name="Hon M."/>
            <person name="Evans R.M."/>
        </authorList>
    </citation>
    <scope>INTERACTION WITH SPEN</scope>
</reference>
<reference key="11">
    <citation type="journal article" date="2001" name="Mol. Cell. Biol.">
        <title>ETO, a target of t(8;21) in acute leukemia, makes distinct contacts with multiple histone deacetylases and binds mSin3A through its oligomerization domain.</title>
        <authorList>
            <person name="Amann J.M."/>
            <person name="Nip J."/>
            <person name="Strom D.K."/>
            <person name="Lutterbach B."/>
            <person name="Harada H."/>
            <person name="Lenny N."/>
            <person name="Downing J.R."/>
            <person name="Meyers S."/>
            <person name="Hiebert S.W."/>
        </authorList>
    </citation>
    <scope>INTERACTION WITH CBFA2T3</scope>
</reference>
<reference key="12">
    <citation type="journal article" date="2002" name="J. Biol. Chem.">
        <title>Isolation and characterization of a novel class II histone deacetylase, HDAC10.</title>
        <authorList>
            <person name="Fischer D.D."/>
            <person name="Cai R."/>
            <person name="Bhatia U."/>
            <person name="Asselbergs F.A.M."/>
            <person name="Song C."/>
            <person name="Terry R."/>
            <person name="Trogani N."/>
            <person name="Widmer R."/>
            <person name="Atadja P."/>
            <person name="Cohen D."/>
        </authorList>
    </citation>
    <scope>INTERACTION WITH HDAC10</scope>
</reference>
<reference key="13">
    <citation type="journal article" date="2002" name="J. Biol. Chem.">
        <title>The transcriptional repressor Sp3 is associated with CK2-phosphorylated histone deacetylase 2.</title>
        <authorList>
            <person name="Sun J.M."/>
            <person name="Chen H.Y."/>
            <person name="Moniwa M."/>
            <person name="Litchfield D.W."/>
            <person name="Seto E."/>
            <person name="Davie J.R."/>
        </authorList>
    </citation>
    <scope>INTERACTION WITH SP3</scope>
</reference>
<reference key="14">
    <citation type="journal article" date="2002" name="J. Cell Sci.">
        <title>Daxx and histone deacetylase II associate with chromatin through an interaction with core histones and the chromatin-associated protein Dek.</title>
        <authorList>
            <person name="Hollenbach A.D."/>
            <person name="McPherson C.J."/>
            <person name="Mientjes E.J."/>
            <person name="Iyengar R."/>
            <person name="Grosveld G."/>
        </authorList>
    </citation>
    <scope>INTERACTION WITH DAXX AND DEK</scope>
</reference>
<reference key="15">
    <citation type="journal article" date="2002" name="Nat. Genet.">
        <title>Acetylation inactivates the transcriptional repressor BCL6.</title>
        <authorList>
            <person name="Bereshchenko O.R."/>
            <person name="Gu W."/>
            <person name="Dalla-Favera R."/>
        </authorList>
    </citation>
    <scope>INTERACTION WITH BCL6</scope>
</reference>
<reference key="16">
    <citation type="journal article" date="2003" name="EMBO J.">
        <title>Role of acetylated human AP-endonuclease (APE1/Ref-1) in regulation of the parathyroid hormone gene.</title>
        <authorList>
            <person name="Bhakat K.K."/>
            <person name="Izumi T."/>
            <person name="Yang S.H."/>
            <person name="Hazra T.K."/>
            <person name="Mitra S."/>
        </authorList>
    </citation>
    <scope>INTERACTION WITH APEX1</scope>
</reference>
<reference key="17">
    <citation type="journal article" date="2003" name="Genes Dev.">
        <title>Human Sin3 deacetylase and trithorax-related Set1/Ash2 histone H3-K4 methyltransferase are tethered together selectively by the cell-proliferation factor HCF-1.</title>
        <authorList>
            <person name="Wysocka J."/>
            <person name="Myers M.P."/>
            <person name="Laherty C.D."/>
            <person name="Eisenman R.N."/>
            <person name="Herr W."/>
        </authorList>
    </citation>
    <scope>INTERACTION WITH HCFC1</scope>
</reference>
<reference key="18">
    <citation type="journal article" date="2003" name="J. Biol. Chem.">
        <title>A candidate X-linked mental retardation gene is a component of a new family of histone deacetylase-containing complexes.</title>
        <authorList>
            <person name="Hakimi M.-A."/>
            <person name="Dong Y."/>
            <person name="Lane W.S."/>
            <person name="Speicher D.W."/>
            <person name="Shiekhattar R."/>
        </authorList>
    </citation>
    <scope>IDENTIFICATION BY MASS SPECTROMETRY</scope>
    <scope>IDENTIFICATION IN THE BHC COMPLEX WITH GSE1; GTF2I; HDAC1; HMG20B; KDM1A; PHF21A; RCOR1; ZMYM2; ZMYM3 AND ZNF217</scope>
</reference>
<reference key="19">
    <citation type="journal article" date="2003" name="Mol. Cell. Biol.">
        <title>Identification and characterization of three new components of the mSin3A corepressor complex.</title>
        <authorList>
            <person name="Fleischer T.C."/>
            <person name="Yun U.J."/>
            <person name="Ayer D.E."/>
        </authorList>
    </citation>
    <scope>FUNCTION</scope>
    <scope>IDENTIFICATION IN A MSIN3A COREPRESSOR COMPLEX WITH SIN3A; SAP130; SUDS3; ARID4B; HDAC1 AND HDAC2</scope>
</reference>
<reference key="20">
    <citation type="journal article" date="2004" name="J. Biol. Chem.">
        <title>The transcriptional corepressor, PELP1, recruits HDAC2 and masks histones using two separate domains.</title>
        <authorList>
            <person name="Choi Y.B."/>
            <person name="Ko J.K."/>
            <person name="Shin J."/>
        </authorList>
    </citation>
    <scope>INTERACTION WITH PELP1</scope>
</reference>
<reference key="21">
    <citation type="journal article" date="2004" name="Nucleic Acids Res.">
        <title>Multiple domains of the receptor-interacting protein 140 contribute to transcription inhibition.</title>
        <authorList>
            <person name="Castet A."/>
            <person name="Boulahtouf A."/>
            <person name="Versini G."/>
            <person name="Bonnet S."/>
            <person name="Augereau P."/>
            <person name="Vignon F."/>
            <person name="Khochbin S."/>
            <person name="Jalaguier S."/>
            <person name="Cavailles V."/>
        </authorList>
    </citation>
    <scope>INTERACTION WITH NRIP1</scope>
</reference>
<reference key="22">
    <citation type="journal article" date="2005" name="J. Biol. Chem.">
        <title>MBD3L2 interacts with MBD3 and components of the NuRD complex and can oppose MBD2-MeCP1-mediated methylation silencing.</title>
        <authorList>
            <person name="Jin S.-G."/>
            <person name="Jiang C.-L."/>
            <person name="Rauch T."/>
            <person name="Li H."/>
            <person name="Pfeifer G.P."/>
        </authorList>
    </citation>
    <scope>INTERACTION WITH MBD3L2</scope>
</reference>
<reference key="23">
    <citation type="journal article" date="2005" name="J. Biol. Chem.">
        <title>Functional characterization of JMJD2A, a histone deacetylase- and retinoblastoma-binding protein.</title>
        <authorList>
            <person name="Gray S.G."/>
            <person name="Iglesias A.H."/>
            <person name="Lizcano F."/>
            <person name="Villanueva R."/>
            <person name="Camelo S."/>
            <person name="Jingu H."/>
            <person name="Teh B.T."/>
            <person name="Koibuchi N."/>
            <person name="Chin W.W."/>
            <person name="Kokkotou E."/>
            <person name="Dangond F."/>
        </authorList>
    </citation>
    <scope>INTERACTION WITH KDM4A</scope>
</reference>
<reference key="24">
    <citation type="journal article" date="2006" name="Cell">
        <title>Global, in vivo, and site-specific phosphorylation dynamics in signaling networks.</title>
        <authorList>
            <person name="Olsen J.V."/>
            <person name="Blagoev B."/>
            <person name="Gnad F."/>
            <person name="Macek B."/>
            <person name="Kumar C."/>
            <person name="Mortensen P."/>
            <person name="Mann M."/>
        </authorList>
    </citation>
    <scope>PHOSPHORYLATION [LARGE SCALE ANALYSIS] AT SER-394; SER-422 AND SER-424</scope>
    <scope>IDENTIFICATION BY MASS SPECTROMETRY [LARGE SCALE ANALYSIS]</scope>
    <source>
        <tissue>Cervix carcinoma</tissue>
    </source>
</reference>
<reference key="25">
    <citation type="journal article" date="2006" name="Mol. Cell. Biol.">
        <title>MBD2/NuRD and MBD3/NuRD, two distinct complexes with different biochemical and functional properties.</title>
        <authorList>
            <person name="Le Guezennec X."/>
            <person name="Vermeulen M."/>
            <person name="Brinkman A.B."/>
            <person name="Hoeijmakers W.A."/>
            <person name="Cohen A."/>
            <person name="Lasonder E."/>
            <person name="Stunnenberg H.G."/>
        </authorList>
    </citation>
    <scope>FUNCTION</scope>
    <scope>IDENTIFICATION IN THE NURD COMPLEX</scope>
    <scope>IDENTIFICATION BY MASS SPECTROMETRY</scope>
</reference>
<reference key="26">
    <citation type="journal article" date="2006" name="Nucleic Acids Res.">
        <title>SAP30L interacts with members of the Sin3A corepressor complex and targets Sin3A to the nucleolus.</title>
        <authorList>
            <person name="Viiri K.M."/>
            <person name="Korkeamaeki H."/>
            <person name="Kukkonen M.K."/>
            <person name="Nieminen L.K."/>
            <person name="Lindfors K."/>
            <person name="Peterson P."/>
            <person name="Maeki M."/>
            <person name="Kainulainen H."/>
            <person name="Lohi O."/>
        </authorList>
    </citation>
    <scope>INTERACTION WITH SAP30L</scope>
</reference>
<reference key="27">
    <citation type="journal article" date="2008" name="Mol. Cell">
        <title>Kinase-selective enrichment enables quantitative phosphoproteomics of the kinome across the cell cycle.</title>
        <authorList>
            <person name="Daub H."/>
            <person name="Olsen J.V."/>
            <person name="Bairlein M."/>
            <person name="Gnad F."/>
            <person name="Oppermann F.S."/>
            <person name="Korner R."/>
            <person name="Greff Z."/>
            <person name="Keri G."/>
            <person name="Stemmann O."/>
            <person name="Mann M."/>
        </authorList>
    </citation>
    <scope>PHOSPHORYLATION [LARGE SCALE ANALYSIS] AT SER-394</scope>
    <scope>IDENTIFICATION BY MASS SPECTROMETRY [LARGE SCALE ANALYSIS]</scope>
    <source>
        <tissue>Cervix carcinoma</tissue>
    </source>
</reference>
<reference key="28">
    <citation type="journal article" date="2008" name="Mol. Cell">
        <title>CDYL bridges REST and histone methyltransferases for gene repression and suppression of cellular transformation.</title>
        <authorList>
            <person name="Mulligan P."/>
            <person name="Westbrook T.F."/>
            <person name="Ottinger M."/>
            <person name="Pavlova N."/>
            <person name="Chang B."/>
            <person name="Macia E."/>
            <person name="Shi Y.J."/>
            <person name="Barretina J."/>
            <person name="Liu J."/>
            <person name="Howley P.M."/>
            <person name="Elledge S.J."/>
            <person name="Shi Y."/>
        </authorList>
    </citation>
    <scope>IDENTIFICATION IN A COMPLEX WITH CDYL; MIER1; MIER2 AND HDAC1</scope>
</reference>
<reference key="29">
    <citation type="journal article" date="2008" name="Mol. Cell. Biol.">
        <title>CtBP is an essential corepressor for BCL6 autoregulation.</title>
        <authorList>
            <person name="Mendez L.M."/>
            <person name="Polo J.M."/>
            <person name="Yu J.J."/>
            <person name="Krupski M."/>
            <person name="Ding B.B."/>
            <person name="Melnick A."/>
            <person name="Ye B.H."/>
        </authorList>
    </citation>
    <scope>INTERACTION WITH BCL6</scope>
</reference>
<reference key="30">
    <citation type="journal article" date="2008" name="Proc. Natl. Acad. Sci. U.S.A.">
        <title>A quantitative atlas of mitotic phosphorylation.</title>
        <authorList>
            <person name="Dephoure N."/>
            <person name="Zhou C."/>
            <person name="Villen J."/>
            <person name="Beausoleil S.A."/>
            <person name="Bakalarski C.E."/>
            <person name="Elledge S.J."/>
            <person name="Gygi S.P."/>
        </authorList>
    </citation>
    <scope>IDENTIFICATION BY MASS SPECTROMETRY [LARGE SCALE ANALYSIS]</scope>
    <source>
        <tissue>Cervix carcinoma</tissue>
    </source>
</reference>
<reference key="31">
    <citation type="journal article" date="2008" name="Proc. Natl. Acad. Sci. U.S.A.">
        <title>RCS1, a substrate of APC/C, controls the metaphase to anaphase transition.</title>
        <authorList>
            <person name="Zhao W.M."/>
            <person name="Coppinger J.A."/>
            <person name="Seki A."/>
            <person name="Cheng X.L."/>
            <person name="Yates J.R. III"/>
            <person name="Fang G."/>
        </authorList>
    </citation>
    <scope>INTERACTION WITH PIMREG</scope>
</reference>
<reference key="32">
    <citation type="journal article" date="2009" name="Anal. Chem.">
        <title>Lys-N and trypsin cover complementary parts of the phosphoproteome in a refined SCX-based approach.</title>
        <authorList>
            <person name="Gauci S."/>
            <person name="Helbig A.O."/>
            <person name="Slijper M."/>
            <person name="Krijgsveld J."/>
            <person name="Heck A.J."/>
            <person name="Mohammed S."/>
        </authorList>
    </citation>
    <scope>IDENTIFICATION BY MASS SPECTROMETRY [LARGE SCALE ANALYSIS]</scope>
</reference>
<reference key="33">
    <citation type="journal article" date="2009" name="J. Biol. Chem.">
        <title>Endosomal adaptor proteins APPL1 and APPL2 are novel activators of beta-catenin/TCF-mediated transcription.</title>
        <authorList>
            <person name="Rashid S."/>
            <person name="Pilecka I."/>
            <person name="Torun A."/>
            <person name="Olchowik M."/>
            <person name="Bielinska B."/>
            <person name="Miaczynska M."/>
        </authorList>
    </citation>
    <scope>INTERACTION WITH RUVBL2; APPL2; APPL1; HDAC1 AND CTNNB1</scope>
</reference>
<reference key="34">
    <citation type="journal article" date="2009" name="PLoS ONE">
        <title>FE65 binds Teashirt, inhibiting expression of the primate-specific caspase-4.</title>
        <authorList>
            <person name="Kajiwara Y."/>
            <person name="Akram A."/>
            <person name="Katsel P."/>
            <person name="Haroutunian V."/>
            <person name="Schmeidler J."/>
            <person name="Beecham G."/>
            <person name="Haines J.L."/>
            <person name="Pericak-Vance M.A."/>
            <person name="Buxbaum J.D."/>
        </authorList>
    </citation>
    <scope>FUNCTION</scope>
    <scope>INTERACTION WITH TSHZ3</scope>
</reference>
<reference key="35">
    <citation type="journal article" date="2009" name="Nat. Cell Biol.">
        <title>Chfr is linked to tumour metastasis through the downregulation of HDAC1.</title>
        <authorList>
            <person name="Oh Y.M."/>
            <person name="Kwon Y.E."/>
            <person name="Kim J.M."/>
            <person name="Bae S.J."/>
            <person name="Lee B.K."/>
            <person name="Yoo S.J."/>
            <person name="Chung C.H."/>
            <person name="Deshaies R.J."/>
            <person name="Seol J.H."/>
        </authorList>
    </citation>
    <scope>INTERACTION WITH CHFR</scope>
</reference>
<reference key="36">
    <citation type="journal article" date="2009" name="Science">
        <title>Regulation of histone acetylation in the nucleus by sphingosine-1-phosphate.</title>
        <authorList>
            <person name="Hait N.C."/>
            <person name="Allegood J."/>
            <person name="Maceyka M."/>
            <person name="Strub G.M."/>
            <person name="Harikumar K.B."/>
            <person name="Singh S.K."/>
            <person name="Luo C."/>
            <person name="Marmorstein R."/>
            <person name="Kordula T."/>
            <person name="Milstien S."/>
            <person name="Spiegel S."/>
        </authorList>
    </citation>
    <scope>INTERACTION WITH SPHK2</scope>
</reference>
<reference key="37">
    <citation type="journal article" date="2009" name="Sci. Signal.">
        <title>Quantitative phosphoproteomic analysis of T cell receptor signaling reveals system-wide modulation of protein-protein interactions.</title>
        <authorList>
            <person name="Mayya V."/>
            <person name="Lundgren D.H."/>
            <person name="Hwang S.-I."/>
            <person name="Rezaul K."/>
            <person name="Wu L."/>
            <person name="Eng J.K."/>
            <person name="Rodionov V."/>
            <person name="Han D.K."/>
        </authorList>
    </citation>
    <scope>PHOSPHORYLATION [LARGE SCALE ANALYSIS] AT SER-394 AND SER-422</scope>
    <scope>IDENTIFICATION BY MASS SPECTROMETRY [LARGE SCALE ANALYSIS]</scope>
    <source>
        <tissue>Leukemic T-cell</tissue>
    </source>
</reference>
<reference key="38">
    <citation type="journal article" date="2010" name="Mol. Biosyst.">
        <title>CDK2AP1/DOC-1 is a bona fide subunit of the Mi-2/NuRD complex.</title>
        <authorList>
            <person name="Spruijt C.G."/>
            <person name="Bartels S.J."/>
            <person name="Brinkman A.B."/>
            <person name="Tjeertes J.V."/>
            <person name="Poser I."/>
            <person name="Stunnenberg H.G."/>
            <person name="Vermeulen M."/>
        </authorList>
    </citation>
    <scope>INTERACTION WITH CDK2AP1</scope>
    <scope>IDENTIFICATION BY MASS SPECTROMETRY</scope>
    <scope>SUBCELLULAR LOCATION</scope>
</reference>
<reference key="39">
    <citation type="journal article" date="2010" name="Sci. Signal.">
        <title>Quantitative phosphoproteomics reveals widespread full phosphorylation site occupancy during mitosis.</title>
        <authorList>
            <person name="Olsen J.V."/>
            <person name="Vermeulen M."/>
            <person name="Santamaria A."/>
            <person name="Kumar C."/>
            <person name="Miller M.L."/>
            <person name="Jensen L.J."/>
            <person name="Gnad F."/>
            <person name="Cox J."/>
            <person name="Jensen T.S."/>
            <person name="Nigg E.A."/>
            <person name="Brunak S."/>
            <person name="Mann M."/>
        </authorList>
    </citation>
    <scope>PHOSPHORYLATION [LARGE SCALE ANALYSIS] AT SER-394; SER-422 AND SER-424</scope>
    <scope>IDENTIFICATION BY MASS SPECTROMETRY [LARGE SCALE ANALYSIS]</scope>
    <source>
        <tissue>Cervix carcinoma</tissue>
    </source>
</reference>
<reference key="40">
    <citation type="journal article" date="2011" name="BMC Syst. Biol.">
        <title>Initial characterization of the human central proteome.</title>
        <authorList>
            <person name="Burkard T.R."/>
            <person name="Planyavsky M."/>
            <person name="Kaupe I."/>
            <person name="Breitwieser F.P."/>
            <person name="Buerckstuemmer T."/>
            <person name="Bennett K.L."/>
            <person name="Superti-Furga G."/>
            <person name="Colinge J."/>
        </authorList>
    </citation>
    <scope>IDENTIFICATION BY MASS SPECTROMETRY [LARGE SCALE ANALYSIS]</scope>
</reference>
<reference key="41">
    <citation type="journal article" date="2011" name="J. Biol. Chem.">
        <title>SUMOylation and SUMO-interacting motif (SIM) of metastasis tumor antigen 1 (MTA1) synergistically regulate its transcriptional repressor function.</title>
        <authorList>
            <person name="Cong L."/>
            <person name="Pakala S.B."/>
            <person name="Ohshiro K."/>
            <person name="Li D.Q."/>
            <person name="Kumar R."/>
        </authorList>
    </citation>
    <scope>FUNCTION</scope>
    <scope>INTERACTION WITH MTA1</scope>
</reference>
<reference key="42">
    <citation type="journal article" date="2011" name="J. Cell Sci.">
        <title>A BEN-domain-containing protein associates with heterochromatin and represses transcription.</title>
        <authorList>
            <person name="Sathyan K.M."/>
            <person name="Shen Z."/>
            <person name="Tripathi V."/>
            <person name="Prasanth K.V."/>
            <person name="Prasanth S.G."/>
        </authorList>
    </citation>
    <scope>INTERACTION WITH BEND3</scope>
</reference>
<reference key="43">
    <citation type="journal article" date="2011" name="Mol. Cell">
        <title>Maintenance of silent chromatin through replication requires SWI/SNF-like chromatin remodeler SMARCAD1.</title>
        <authorList>
            <person name="Rowbotham S.P."/>
            <person name="Barki L."/>
            <person name="Neves-Costa A."/>
            <person name="Santos F."/>
            <person name="Dean W."/>
            <person name="Hawkes N."/>
            <person name="Choudhary P."/>
            <person name="Will W.R."/>
            <person name="Webster J."/>
            <person name="Oxley D."/>
            <person name="Green C.M."/>
            <person name="Varga-Weisz P."/>
            <person name="Mermoud J.E."/>
        </authorList>
    </citation>
    <scope>INTERACTION WITH SMARCAD1</scope>
</reference>
<reference key="44">
    <citation type="journal article" date="2011" name="PLoS Genet.">
        <title>Nuclear cGMP-dependent kinase regulates gene expression via activity-dependent recruitment of a conserved histone deacetylase complex.</title>
        <authorList>
            <person name="Hao Y."/>
            <person name="Xu N."/>
            <person name="Box A.C."/>
            <person name="Schaefer L."/>
            <person name="Kannan K."/>
            <person name="Zhang Y."/>
            <person name="Florens L."/>
            <person name="Seidel C."/>
            <person name="Washburn M.P."/>
            <person name="Wiegraebe W."/>
            <person name="Mak H.Y."/>
        </authorList>
    </citation>
    <scope>INTERACTION WITH DNTTIP1 AND ZNF541</scope>
</reference>
<reference key="45">
    <citation type="journal article" date="2011" name="Sci. Signal.">
        <title>System-wide temporal characterization of the proteome and phosphoproteome of human embryonic stem cell differentiation.</title>
        <authorList>
            <person name="Rigbolt K.T."/>
            <person name="Prokhorova T.A."/>
            <person name="Akimov V."/>
            <person name="Henningsen J."/>
            <person name="Johansen P.T."/>
            <person name="Kratchmarova I."/>
            <person name="Kassem M."/>
            <person name="Mann M."/>
            <person name="Olsen J.V."/>
            <person name="Blagoev B."/>
        </authorList>
    </citation>
    <scope>PHOSPHORYLATION [LARGE SCALE ANALYSIS] AT SER-394; SER-422 AND SER-424</scope>
    <scope>IDENTIFICATION BY MASS SPECTROMETRY [LARGE SCALE ANALYSIS]</scope>
</reference>
<reference key="46">
    <citation type="journal article" date="2013" name="J. Proteome Res.">
        <title>Toward a comprehensive characterization of a human cancer cell phosphoproteome.</title>
        <authorList>
            <person name="Zhou H."/>
            <person name="Di Palma S."/>
            <person name="Preisinger C."/>
            <person name="Peng M."/>
            <person name="Polat A.N."/>
            <person name="Heck A.J."/>
            <person name="Mohammed S."/>
        </authorList>
    </citation>
    <scope>PHOSPHORYLATION [LARGE SCALE ANALYSIS] AT SER-394; SER-407; SER-422 AND SER-424</scope>
    <scope>IDENTIFICATION BY MASS SPECTROMETRY [LARGE SCALE ANALYSIS]</scope>
    <source>
        <tissue>Cervix carcinoma</tissue>
        <tissue>Erythroleukemia</tissue>
    </source>
</reference>
<reference key="47">
    <citation type="journal article" date="2013" name="Oncogene">
        <title>RBB, a novel transcription repressor, represses the transcription of HDM2 oncogene.</title>
        <authorList>
            <person name="Xuan C."/>
            <person name="Wang Q."/>
            <person name="Han X."/>
            <person name="Duan Y."/>
            <person name="Li L."/>
            <person name="Shi L."/>
            <person name="Wang Y."/>
            <person name="Shan L."/>
            <person name="Yao Z."/>
            <person name="Shang Y."/>
        </authorList>
    </citation>
    <scope>INTERACTION WITH NACC2</scope>
</reference>
<reference key="48">
    <citation type="journal article" date="2014" name="J. Proteomics">
        <title>An enzyme assisted RP-RPLC approach for in-depth analysis of human liver phosphoproteome.</title>
        <authorList>
            <person name="Bian Y."/>
            <person name="Song C."/>
            <person name="Cheng K."/>
            <person name="Dong M."/>
            <person name="Wang F."/>
            <person name="Huang J."/>
            <person name="Sun D."/>
            <person name="Wang L."/>
            <person name="Ye M."/>
            <person name="Zou H."/>
        </authorList>
    </citation>
    <scope>PHOSPHORYLATION [LARGE SCALE ANALYSIS] AT SER-394; SER-422 AND SER-424</scope>
    <scope>IDENTIFICATION BY MASS SPECTROMETRY [LARGE SCALE ANALYSIS]</scope>
    <source>
        <tissue>Liver</tissue>
    </source>
</reference>
<reference key="49">
    <citation type="journal article" date="2014" name="Nat. Struct. Mol. Biol.">
        <title>Uncovering global SUMOylation signaling networks in a site-specific manner.</title>
        <authorList>
            <person name="Hendriks I.A."/>
            <person name="D'Souza R.C."/>
            <person name="Yang B."/>
            <person name="Verlaan-de Vries M."/>
            <person name="Mann M."/>
            <person name="Vertegaal A.C."/>
        </authorList>
    </citation>
    <scope>SUMOYLATION [LARGE SCALE ANALYSIS] AT LYS-462</scope>
    <scope>IDENTIFICATION BY MASS SPECTROMETRY [LARGE SCALE ANALYSIS]</scope>
</reference>
<reference key="50">
    <citation type="journal article" date="2014" name="Oncotarget">
        <title>The subcellular distribution and function of MTA1 in cancer differentiation.</title>
        <authorList>
            <person name="Liu J."/>
            <person name="Xu D."/>
            <person name="Wang H."/>
            <person name="Zhang Y."/>
            <person name="Chang Y."/>
            <person name="Zhang J."/>
            <person name="Wang J."/>
            <person name="Li C."/>
            <person name="Liu H."/>
            <person name="Zhao M."/>
            <person name="Lin C."/>
            <person name="Zhan Q."/>
            <person name="Huang C."/>
            <person name="Qian H."/>
        </authorList>
    </citation>
    <scope>SUBCELLULAR LOCATION</scope>
    <scope>INTERACTION WITH MTA1</scope>
</reference>
<reference key="51">
    <citation type="journal article" date="2015" name="Cell Rep.">
        <title>SUMO-2 orchestrates chromatin modifiers in response to DNA damage.</title>
        <authorList>
            <person name="Hendriks I.A."/>
            <person name="Treffers L.W."/>
            <person name="Verlaan-de Vries M."/>
            <person name="Olsen J.V."/>
            <person name="Vertegaal A.C."/>
        </authorList>
    </citation>
    <scope>SUMOYLATION [LARGE SCALE ANALYSIS] AT LYS-481</scope>
    <scope>IDENTIFICATION BY MASS SPECTROMETRY [LARGE SCALE ANALYSIS]</scope>
</reference>
<reference key="52">
    <citation type="journal article" date="2015" name="Genes Dev.">
        <title>Screen identifies bromodomain protein ZMYND8 in chromatin recognition of transcription-associated DNA damage that promotes homologous recombination.</title>
        <authorList>
            <person name="Gong F."/>
            <person name="Chiu L.Y."/>
            <person name="Cox B."/>
            <person name="Aymard F."/>
            <person name="Clouaire T."/>
            <person name="Leung J.W."/>
            <person name="Cammarata M."/>
            <person name="Perez M."/>
            <person name="Agarwal P."/>
            <person name="Brodbelt J.S."/>
            <person name="Legube G."/>
            <person name="Miller K.M."/>
        </authorList>
    </citation>
    <scope>INTERACTION WITH ZMYND8 AND CHD4</scope>
    <scope>IDENTIFICATION IN THE NURD COMPLEX</scope>
    <scope>IDENTIFICATION BY MASS SPECTROMETRY</scope>
</reference>
<reference key="53">
    <citation type="journal article" date="2015" name="Mol. Cell. Proteomics">
        <title>System-wide analysis of SUMOylation dynamics in response to replication stress reveals novel small ubiquitin-like modified target proteins and acceptor lysines relevant for genome stability.</title>
        <authorList>
            <person name="Xiao Z."/>
            <person name="Chang J.G."/>
            <person name="Hendriks I.A."/>
            <person name="Sigurdsson J.O."/>
            <person name="Olsen J.V."/>
            <person name="Vertegaal A.C."/>
        </authorList>
    </citation>
    <scope>SUMOYLATION [LARGE SCALE ANALYSIS] AT LYS-462 AND LYS-481</scope>
    <scope>IDENTIFICATION BY MASS SPECTROMETRY [LARGE SCALE ANALYSIS]</scope>
</reference>
<reference key="54">
    <citation type="journal article" date="2017" name="Cell Res.">
        <title>Class I histone deacetylases are major histone decrotonylases: evidence for critical and broad function of histone crotonylation in transcription.</title>
        <authorList>
            <person name="Wei W."/>
            <person name="Liu X."/>
            <person name="Chen J."/>
            <person name="Gao S."/>
            <person name="Lu L."/>
            <person name="Zhang H."/>
            <person name="Ding G."/>
            <person name="Wang Z."/>
            <person name="Chen Z."/>
            <person name="Shi T."/>
            <person name="Li J."/>
            <person name="Yu J."/>
            <person name="Wong J."/>
        </authorList>
    </citation>
    <scope>FUNCTION</scope>
    <scope>CATALYTIC ACTIVITY</scope>
</reference>
<reference key="55">
    <citation type="journal article" date="2017" name="Nat. Struct. Mol. Biol.">
        <title>Site-specific mapping of the human SUMO proteome reveals co-modification with phosphorylation.</title>
        <authorList>
            <person name="Hendriks I.A."/>
            <person name="Lyon D."/>
            <person name="Young C."/>
            <person name="Jensen L.J."/>
            <person name="Vertegaal A.C."/>
            <person name="Nielsen M.L."/>
        </authorList>
    </citation>
    <scope>SUMOYLATION [LARGE SCALE ANALYSIS] AT LYS-75; LYS-452; LYS-458; LYS-462; LYS-478 AND LYS-481</scope>
    <scope>IDENTIFICATION BY MASS SPECTROMETRY [LARGE SCALE ANALYSIS]</scope>
</reference>
<reference key="56">
    <citation type="journal article" date="2017" name="Nucleic Acids Res.">
        <title>CHD3 and CHD4 form distinct NuRD complexes with different yet overlapping functionality.</title>
        <authorList>
            <person name="Hoffmeister H."/>
            <person name="Fuchs A."/>
            <person name="Erdel F."/>
            <person name="Pinz S."/>
            <person name="Groebner-Ferreira R."/>
            <person name="Bruckmann A."/>
            <person name="Deutzmann R."/>
            <person name="Schwartz U."/>
            <person name="Maldonado R."/>
            <person name="Huber C."/>
            <person name="Dendorfer A.S."/>
            <person name="Rippe K."/>
            <person name="Laengst G."/>
        </authorList>
    </citation>
    <scope>FUNCTION</scope>
    <scope>IDENTIFICATION IN THE NURD COMPLEX</scope>
    <scope>IDENTIFICATION BY MASS SPECTROMETRY</scope>
    <scope>SUBCELLULAR LOCATION</scope>
</reference>
<reference key="57">
    <citation type="journal article" date="2018" name="Cell Res.">
        <title>Landscape of the regulatory elements for lysine 2-hydroxyisobutyrylation pathway.</title>
        <authorList>
            <person name="Huang H."/>
            <person name="Luo Z."/>
            <person name="Qi S."/>
            <person name="Huang J."/>
            <person name="Xu P."/>
            <person name="Wang X."/>
            <person name="Gao L."/>
            <person name="Li F."/>
            <person name="Wang J."/>
            <person name="Zhao W."/>
            <person name="Gu W."/>
            <person name="Chen Z."/>
            <person name="Dai L."/>
            <person name="Dai J."/>
            <person name="Zhao Y."/>
        </authorList>
    </citation>
    <scope>FUNCTION</scope>
    <scope>CATALYTIC ACTIVITY</scope>
</reference>
<reference key="58">
    <citation type="journal article" date="2020" name="Oncogene">
        <title>The EGFR-ZNF263 signaling axis silences SIX3 in glioblastoma epigenetically.</title>
        <authorList>
            <person name="Yu Z."/>
            <person name="Feng J."/>
            <person name="Wang W."/>
            <person name="Deng Z."/>
            <person name="Zhang Y."/>
            <person name="Xiao L."/>
            <person name="Wang Z."/>
            <person name="Liu C."/>
            <person name="Liu Q."/>
            <person name="Chen S."/>
            <person name="Wu M."/>
        </authorList>
    </citation>
    <scope>INTERACTION WITH ZNF263</scope>
</reference>
<reference key="59">
    <citation type="journal article" date="2021" name="FEBS J.">
        <title>Cross-linking mass spectrometry reveals the structural topology of peripheral NuRD subunits relative to the core complex.</title>
        <authorList>
            <person name="Spruijt C.G."/>
            <person name="Graewe C."/>
            <person name="Kleinendorst S.C."/>
            <person name="Baltissen M.P.A."/>
            <person name="Vermeulen M."/>
        </authorList>
    </citation>
    <scope>IDENTIFICATION IN THE NURD COMPLEX</scope>
    <scope>INTERACTION WITH GATAD2A</scope>
    <scope>IDENTIFICATION BY MASS SPECTROMETRY</scope>
    <scope>SUBCELLULAR LOCATION</scope>
</reference>
<reference key="60">
    <citation type="journal article" date="2022" name="Sci. Adv.">
        <title>Class I histone deacetylases (HDAC1-3) are histone lysine delactylases.</title>
        <authorList>
            <person name="Moreno-Yruela C."/>
            <person name="Zhang D."/>
            <person name="Wei W."/>
            <person name="Baek M."/>
            <person name="Liu W."/>
            <person name="Gao J."/>
            <person name="Dankova D."/>
            <person name="Nielsen A.L."/>
            <person name="Bolding J.E."/>
            <person name="Yang L."/>
            <person name="Jameson S.T."/>
            <person name="Wong J."/>
            <person name="Olsen C.A."/>
            <person name="Zhao Y."/>
        </authorList>
    </citation>
    <scope>FUNCTION</scope>
    <scope>CATALYTIC ACTIVITY</scope>
</reference>
<reference key="61">
    <citation type="journal article" date="2010" name="Bioorg. Med. Chem. Lett.">
        <title>Exploration of the HDAC2 foot pocket: Synthesis and SAR of substituted N-(2-aminophenyl)benzamides.</title>
        <authorList>
            <person name="Bressi J.C."/>
            <person name="Jennings A.J."/>
            <person name="Skene R."/>
            <person name="Wu Y."/>
            <person name="Melkus R."/>
            <person name="De Jong R."/>
            <person name="O'Connell S."/>
            <person name="Grimshaw C.E."/>
            <person name="Navre M."/>
            <person name="Gangloff A.R."/>
        </authorList>
    </citation>
    <scope>X-RAY CRYSTALLOGRAPHY (2.05 ANGSTROMS) OF 9-374 IN COMPLEX WITH SUBSTITUTED N-(2-AMINOPHENYL)BENZAMIDE INHIBITORS</scope>
</reference>
<reference evidence="53 54 55 56" key="62">
    <citation type="journal article" date="2023" name="Nat. Commun.">
        <title>Mechanism of assembly, activation and lysine selection by the SIN3B histone deacetylase complex.</title>
        <authorList>
            <person name="Wan M.S.M."/>
            <person name="Muhammad R."/>
            <person name="Koliopoulos M.G."/>
            <person name="Roumeliotis T.I."/>
            <person name="Choudhary J.S."/>
            <person name="Alfieri C."/>
        </authorList>
    </citation>
    <scope>STRUCTURE BY ELECTRON MICROSCOPY (2.80 ANGSTROMS) IN COMPLEX WITH HDAC2; SIN3B; MORF4L1; CALCIUM AND ZINC</scope>
    <scope>FUNCTION</scope>
    <scope>SUBUNIT</scope>
</reference>
<sequence>MAYSQGGGKKKVCYYYDGDIGNYYYGQGHPMKPHRIRMTHNLLLNYGLYRKMEIYRPHKATAEEMTKYHSDEYIKFLRSIRPDNMSEYSKQMQRFNVGEDCPVFDGLFEFCQLSTGGSVAGAVKLNRQQTDMAVNWAGGLHHAKKSEASGFCYVNDIVLAILELLKYHQRVLYIDIDIHHGDGVEEAFYTTDRVMTVSFHKYGEYFPGTGDLRDIGAGKGKYYAVNFPMRDGIDDESYGQIFKPIISKVMEMYQPSAVVLQCGADSLSGDRLGCFNLTVKGHAKCVEVVKTFNLPLLMLGGGGYTIRNVARCWTYETAVALDCEIPNELPYNDYFEYFGPDFKLHISPSNMTNQNTPEYMEKIKQRLFENLRMLPHAPGVQMQAIPEDAVHEDSGDEDGEDPDKRISIRASDKRIACDEEFSDSEDEGEGGRRNVADHKKGAKKARIEEDKKETEDKKTDVKEEDKSKDNSGEKTDTKGTKSEQLSNP</sequence>
<evidence type="ECO:0000250" key="1">
    <source>
        <dbReference type="UniProtKB" id="O15379"/>
    </source>
</evidence>
<evidence type="ECO:0000250" key="2">
    <source>
        <dbReference type="UniProtKB" id="P70288"/>
    </source>
</evidence>
<evidence type="ECO:0000250" key="3">
    <source>
        <dbReference type="UniProtKB" id="Q13547"/>
    </source>
</evidence>
<evidence type="ECO:0000256" key="4">
    <source>
        <dbReference type="SAM" id="MobiDB-lite"/>
    </source>
</evidence>
<evidence type="ECO:0000269" key="5">
    <source>
    </source>
</evidence>
<evidence type="ECO:0000269" key="6">
    <source>
    </source>
</evidence>
<evidence type="ECO:0000269" key="7">
    <source>
    </source>
</evidence>
<evidence type="ECO:0000269" key="8">
    <source>
    </source>
</evidence>
<evidence type="ECO:0000269" key="9">
    <source>
    </source>
</evidence>
<evidence type="ECO:0000269" key="10">
    <source>
    </source>
</evidence>
<evidence type="ECO:0000269" key="11">
    <source>
    </source>
</evidence>
<evidence type="ECO:0000269" key="12">
    <source>
    </source>
</evidence>
<evidence type="ECO:0000269" key="13">
    <source>
    </source>
</evidence>
<evidence type="ECO:0000269" key="14">
    <source>
    </source>
</evidence>
<evidence type="ECO:0000269" key="15">
    <source>
    </source>
</evidence>
<evidence type="ECO:0000269" key="16">
    <source>
    </source>
</evidence>
<evidence type="ECO:0000269" key="17">
    <source>
    </source>
</evidence>
<evidence type="ECO:0000269" key="18">
    <source>
    </source>
</evidence>
<evidence type="ECO:0000269" key="19">
    <source>
    </source>
</evidence>
<evidence type="ECO:0000269" key="20">
    <source>
    </source>
</evidence>
<evidence type="ECO:0000269" key="21">
    <source>
    </source>
</evidence>
<evidence type="ECO:0000269" key="22">
    <source>
    </source>
</evidence>
<evidence type="ECO:0000269" key="23">
    <source>
    </source>
</evidence>
<evidence type="ECO:0000269" key="24">
    <source>
    </source>
</evidence>
<evidence type="ECO:0000269" key="25">
    <source>
    </source>
</evidence>
<evidence type="ECO:0000269" key="26">
    <source>
    </source>
</evidence>
<evidence type="ECO:0000269" key="27">
    <source>
    </source>
</evidence>
<evidence type="ECO:0000269" key="28">
    <source>
    </source>
</evidence>
<evidence type="ECO:0000269" key="29">
    <source>
    </source>
</evidence>
<evidence type="ECO:0000269" key="30">
    <source>
    </source>
</evidence>
<evidence type="ECO:0000269" key="31">
    <source>
    </source>
</evidence>
<evidence type="ECO:0000269" key="32">
    <source>
    </source>
</evidence>
<evidence type="ECO:0000269" key="33">
    <source>
    </source>
</evidence>
<evidence type="ECO:0000269" key="34">
    <source>
    </source>
</evidence>
<evidence type="ECO:0000269" key="35">
    <source>
    </source>
</evidence>
<evidence type="ECO:0000269" key="36">
    <source>
    </source>
</evidence>
<evidence type="ECO:0000269" key="37">
    <source>
    </source>
</evidence>
<evidence type="ECO:0000269" key="38">
    <source>
    </source>
</evidence>
<evidence type="ECO:0000269" key="39">
    <source>
    </source>
</evidence>
<evidence type="ECO:0000269" key="40">
    <source>
    </source>
</evidence>
<evidence type="ECO:0000269" key="41">
    <source>
    </source>
</evidence>
<evidence type="ECO:0000269" key="42">
    <source>
    </source>
</evidence>
<evidence type="ECO:0000269" key="43">
    <source>
    </source>
</evidence>
<evidence type="ECO:0000269" key="44">
    <source>
    </source>
</evidence>
<evidence type="ECO:0000269" key="45">
    <source>
    </source>
</evidence>
<evidence type="ECO:0000269" key="46">
    <source>
    </source>
</evidence>
<evidence type="ECO:0000303" key="47">
    <source>
    </source>
</evidence>
<evidence type="ECO:0000303" key="48">
    <source>
    </source>
</evidence>
<evidence type="ECO:0000303" key="49">
    <source>
    </source>
</evidence>
<evidence type="ECO:0000305" key="50"/>
<evidence type="ECO:0000305" key="51">
    <source>
    </source>
</evidence>
<evidence type="ECO:0000312" key="52">
    <source>
        <dbReference type="HGNC" id="HGNC:4853"/>
    </source>
</evidence>
<evidence type="ECO:0007744" key="53">
    <source>
        <dbReference type="PDB" id="8BPA"/>
    </source>
</evidence>
<evidence type="ECO:0007744" key="54">
    <source>
        <dbReference type="PDB" id="8BPB"/>
    </source>
</evidence>
<evidence type="ECO:0007744" key="55">
    <source>
        <dbReference type="PDB" id="8BPC"/>
    </source>
</evidence>
<evidence type="ECO:0007744" key="56">
    <source>
        <dbReference type="PDB" id="8C60"/>
    </source>
</evidence>
<evidence type="ECO:0007744" key="57">
    <source>
    </source>
</evidence>
<evidence type="ECO:0007744" key="58">
    <source>
    </source>
</evidence>
<evidence type="ECO:0007744" key="59">
    <source>
    </source>
</evidence>
<evidence type="ECO:0007744" key="60">
    <source>
    </source>
</evidence>
<evidence type="ECO:0007744" key="61">
    <source>
    </source>
</evidence>
<evidence type="ECO:0007744" key="62">
    <source>
    </source>
</evidence>
<evidence type="ECO:0007744" key="63">
    <source>
    </source>
</evidence>
<evidence type="ECO:0007744" key="64">
    <source>
    </source>
</evidence>
<evidence type="ECO:0007744" key="65">
    <source>
    </source>
</evidence>
<evidence type="ECO:0007744" key="66">
    <source>
    </source>
</evidence>
<evidence type="ECO:0007744" key="67">
    <source>
    </source>
</evidence>
<evidence type="ECO:0007829" key="68">
    <source>
        <dbReference type="PDB" id="6WBW"/>
    </source>
</evidence>
<evidence type="ECO:0007829" key="69">
    <source>
        <dbReference type="PDB" id="6WBZ"/>
    </source>
</evidence>
<evidence type="ECO:0007829" key="70">
    <source>
        <dbReference type="PDB" id="6WHQ"/>
    </source>
</evidence>
<evidence type="ECO:0007829" key="71">
    <source>
        <dbReference type="PDB" id="7KBG"/>
    </source>
</evidence>
<gene>
    <name evidence="47 52" type="primary">HDAC2</name>
</gene>
<organism>
    <name type="scientific">Homo sapiens</name>
    <name type="common">Human</name>
    <dbReference type="NCBI Taxonomy" id="9606"/>
    <lineage>
        <taxon>Eukaryota</taxon>
        <taxon>Metazoa</taxon>
        <taxon>Chordata</taxon>
        <taxon>Craniata</taxon>
        <taxon>Vertebrata</taxon>
        <taxon>Euteleostomi</taxon>
        <taxon>Mammalia</taxon>
        <taxon>Eutheria</taxon>
        <taxon>Euarchontoglires</taxon>
        <taxon>Primates</taxon>
        <taxon>Haplorrhini</taxon>
        <taxon>Catarrhini</taxon>
        <taxon>Hominidae</taxon>
        <taxon>Homo</taxon>
    </lineage>
</organism>
<feature type="chain" id="PRO_0000114693" description="Histone deacetylase 2">
    <location>
        <begin position="1"/>
        <end position="488"/>
    </location>
</feature>
<feature type="region of interest" description="Histone deacetylase">
    <location>
        <begin position="9"/>
        <end position="322"/>
    </location>
</feature>
<feature type="region of interest" description="Disordered" evidence="4">
    <location>
        <begin position="389"/>
        <end position="488"/>
    </location>
</feature>
<feature type="compositionally biased region" description="Basic and acidic residues" evidence="4">
    <location>
        <begin position="402"/>
        <end position="417"/>
    </location>
</feature>
<feature type="compositionally biased region" description="Acidic residues" evidence="4">
    <location>
        <begin position="418"/>
        <end position="428"/>
    </location>
</feature>
<feature type="compositionally biased region" description="Basic and acidic residues" evidence="4">
    <location>
        <begin position="429"/>
        <end position="481"/>
    </location>
</feature>
<feature type="active site" evidence="3">
    <location>
        <position position="142"/>
    </location>
</feature>
<feature type="binding site" evidence="1">
    <location>
        <position position="28"/>
    </location>
    <ligand>
        <name>1D-myo-inositol 1,4,5,6-tetrakisphosphate</name>
        <dbReference type="ChEBI" id="CHEBI:57627"/>
    </ligand>
</feature>
<feature type="binding site" evidence="1">
    <location>
        <position position="32"/>
    </location>
    <ligand>
        <name>1D-myo-inositol 1,4,5,6-tetrakisphosphate</name>
        <dbReference type="ChEBI" id="CHEBI:57627"/>
    </ligand>
</feature>
<feature type="binding site" evidence="45 53 54 55">
    <location>
        <position position="175"/>
    </location>
    <ligand>
        <name>Ca(2+)</name>
        <dbReference type="ChEBI" id="CHEBI:29108"/>
        <label>1</label>
    </ligand>
</feature>
<feature type="binding site" evidence="45 53 54 55">
    <location>
        <position position="177"/>
    </location>
    <ligand>
        <name>Ca(2+)</name>
        <dbReference type="ChEBI" id="CHEBI:29108"/>
        <label>1</label>
    </ligand>
</feature>
<feature type="binding site" evidence="45 53 54 55">
    <location>
        <position position="177"/>
    </location>
    <ligand>
        <name>Zn(2+)</name>
        <dbReference type="ChEBI" id="CHEBI:29105"/>
    </ligand>
</feature>
<feature type="binding site" evidence="45 53 54 55">
    <location>
        <position position="179"/>
    </location>
    <ligand>
        <name>Ca(2+)</name>
        <dbReference type="ChEBI" id="CHEBI:29108"/>
        <label>1</label>
    </ligand>
</feature>
<feature type="binding site" evidence="45 53 54 55">
    <location>
        <position position="179"/>
    </location>
    <ligand>
        <name>Zn(2+)</name>
        <dbReference type="ChEBI" id="CHEBI:29105"/>
    </ligand>
</feature>
<feature type="binding site" evidence="45 53 54 55">
    <location>
        <position position="188"/>
    </location>
    <ligand>
        <name>Ca(2+)</name>
        <dbReference type="ChEBI" id="CHEBI:29108"/>
        <label>2</label>
    </ligand>
</feature>
<feature type="binding site" evidence="45 53 54 55">
    <location>
        <position position="191"/>
    </location>
    <ligand>
        <name>Ca(2+)</name>
        <dbReference type="ChEBI" id="CHEBI:29108"/>
        <label>2</label>
    </ligand>
</feature>
<feature type="binding site" evidence="45 53 54 55">
    <location>
        <position position="194"/>
    </location>
    <ligand>
        <name>Ca(2+)</name>
        <dbReference type="ChEBI" id="CHEBI:29108"/>
        <label>2</label>
    </ligand>
</feature>
<feature type="binding site" evidence="45 53 54 55">
    <location>
        <position position="198"/>
    </location>
    <ligand>
        <name>Ca(2+)</name>
        <dbReference type="ChEBI" id="CHEBI:29108"/>
        <label>1</label>
    </ligand>
</feature>
<feature type="binding site" evidence="45 53 54 55">
    <location>
        <position position="199"/>
    </location>
    <ligand>
        <name>Ca(2+)</name>
        <dbReference type="ChEBI" id="CHEBI:29108"/>
        <label>1</label>
    </ligand>
</feature>
<feature type="binding site" evidence="45 54 55">
    <location>
        <position position="223"/>
    </location>
    <ligand>
        <name>Ca(2+)</name>
        <dbReference type="ChEBI" id="CHEBI:29108"/>
        <label>2</label>
    </ligand>
</feature>
<feature type="binding site" evidence="45 53 54 55">
    <location>
        <position position="265"/>
    </location>
    <ligand>
        <name>Zn(2+)</name>
        <dbReference type="ChEBI" id="CHEBI:29105"/>
    </ligand>
</feature>
<feature type="binding site" evidence="1">
    <location>
        <position position="271"/>
    </location>
    <ligand>
        <name>1D-myo-inositol 1,4,5,6-tetrakisphosphate</name>
        <dbReference type="ChEBI" id="CHEBI:57627"/>
    </ligand>
</feature>
<feature type="modified residue" description="N6-acetyllysine; alternate" evidence="3">
    <location>
        <position position="75"/>
    </location>
</feature>
<feature type="modified residue" description="N6-acetyllysine" evidence="3">
    <location>
        <position position="221"/>
    </location>
</feature>
<feature type="modified residue" description="S-nitrosocysteine" evidence="2">
    <location>
        <position position="262"/>
    </location>
</feature>
<feature type="modified residue" description="S-nitrosocysteine" evidence="2">
    <location>
        <position position="274"/>
    </location>
</feature>
<feature type="modified residue" description="Phosphoserine" evidence="57 58 59 60 61 62 63">
    <location>
        <position position="394"/>
    </location>
</feature>
<feature type="modified residue" description="Phosphoserine" evidence="62">
    <location>
        <position position="407"/>
    </location>
</feature>
<feature type="modified residue" description="Phosphoserine" evidence="57 59 60 61 62 63">
    <location>
        <position position="422"/>
    </location>
</feature>
<feature type="modified residue" description="Phosphoserine" evidence="57 60 61 62 63">
    <location>
        <position position="424"/>
    </location>
</feature>
<feature type="cross-link" description="Glycyl lysine isopeptide (Lys-Gly) (interchain with G-Cter in SUMO2); alternate" evidence="67">
    <location>
        <position position="75"/>
    </location>
</feature>
<feature type="cross-link" description="Glycyl lysine isopeptide (Lys-Gly) (interchain with G-Cter in SUMO2)" evidence="3">
    <location>
        <position position="439"/>
    </location>
</feature>
<feature type="cross-link" description="Glycyl lysine isopeptide (Lys-Gly) (interchain with G-Cter in SUMO2)" evidence="67">
    <location>
        <position position="452"/>
    </location>
</feature>
<feature type="cross-link" description="Glycyl lysine isopeptide (Lys-Gly) (interchain with G-Cter in SUMO2)" evidence="67">
    <location>
        <position position="458"/>
    </location>
</feature>
<feature type="cross-link" description="Glycyl lysine isopeptide (Lys-Gly) (interchain with G-Cter in SUMO2)" evidence="64 65 67">
    <location>
        <position position="462"/>
    </location>
</feature>
<feature type="cross-link" description="Glycyl lysine isopeptide (Lys-Gly) (interchain with G-Cter in SUMO2)" evidence="67">
    <location>
        <position position="478"/>
    </location>
</feature>
<feature type="cross-link" description="Glycyl lysine isopeptide (Lys-Gly) (interchain with G-Cter in SUMO2)" evidence="65 66 67">
    <location>
        <position position="481"/>
    </location>
</feature>
<feature type="splice variant" id="VSP_056175" description="In isoform 2." evidence="49">
    <location>
        <begin position="1"/>
        <end position="30"/>
    </location>
</feature>
<feature type="sequence variant" id="VAR_025311" description="In dbSNP:rs1042903." evidence="46">
    <original>R</original>
    <variation>C</variation>
    <location>
        <position position="230"/>
    </location>
</feature>
<feature type="sequence variant" id="VAR_025312" description="In dbSNP:rs17852888." evidence="20">
    <original>Y</original>
    <variation>H</variation>
    <location>
        <position position="315"/>
    </location>
</feature>
<feature type="sequence conflict" description="In Ref. 1; AAC50814." evidence="50" ref="1">
    <original>QR</original>
    <variation>HI</variation>
    <location>
        <begin position="93"/>
        <end position="94"/>
    </location>
</feature>
<feature type="sequence conflict" description="In Ref. 1; AAC50814." evidence="50" ref="1">
    <original>V</original>
    <variation>A</variation>
    <location>
        <position position="103"/>
    </location>
</feature>
<feature type="sequence conflict" description="In Ref. 1; AAC50814." evidence="50" ref="1">
    <original>S</original>
    <variation>Y</variation>
    <location>
        <position position="146"/>
    </location>
</feature>
<feature type="sequence conflict" description="In Ref. 2; BAG59420." evidence="50" ref="2">
    <original>K</original>
    <variation>M</variation>
    <location>
        <position position="248"/>
    </location>
</feature>
<feature type="sequence conflict" description="In Ref. 2; BAG59420." evidence="50" ref="2">
    <original>G</original>
    <variation>D</variation>
    <location>
        <position position="281"/>
    </location>
</feature>
<feature type="strand" evidence="71">
    <location>
        <begin position="12"/>
        <end position="15"/>
    </location>
</feature>
<feature type="helix" evidence="71">
    <location>
        <begin position="20"/>
        <end position="22"/>
    </location>
</feature>
<feature type="helix" evidence="71">
    <location>
        <begin position="34"/>
        <end position="45"/>
    </location>
</feature>
<feature type="helix" evidence="71">
    <location>
        <begin position="48"/>
        <end position="51"/>
    </location>
</feature>
<feature type="strand" evidence="71">
    <location>
        <begin position="52"/>
        <end position="55"/>
    </location>
</feature>
<feature type="helix" evidence="71">
    <location>
        <begin position="62"/>
        <end position="65"/>
    </location>
</feature>
<feature type="turn" evidence="71">
    <location>
        <begin position="66"/>
        <end position="68"/>
    </location>
</feature>
<feature type="helix" evidence="71">
    <location>
        <begin position="71"/>
        <end position="79"/>
    </location>
</feature>
<feature type="turn" evidence="71">
    <location>
        <begin position="82"/>
        <end position="84"/>
    </location>
</feature>
<feature type="helix" evidence="71">
    <location>
        <begin position="85"/>
        <end position="88"/>
    </location>
</feature>
<feature type="helix" evidence="71">
    <location>
        <begin position="89"/>
        <end position="94"/>
    </location>
</feature>
<feature type="strand" evidence="71">
    <location>
        <begin position="98"/>
        <end position="101"/>
    </location>
</feature>
<feature type="helix" evidence="71">
    <location>
        <begin position="107"/>
        <end position="126"/>
    </location>
</feature>
<feature type="strand" evidence="71">
    <location>
        <begin position="131"/>
        <end position="135"/>
    </location>
</feature>
<feature type="strand" evidence="70">
    <location>
        <begin position="145"/>
        <end position="147"/>
    </location>
</feature>
<feature type="strand" evidence="69">
    <location>
        <begin position="152"/>
        <end position="154"/>
    </location>
</feature>
<feature type="helix" evidence="71">
    <location>
        <begin position="156"/>
        <end position="164"/>
    </location>
</feature>
<feature type="turn" evidence="71">
    <location>
        <begin position="165"/>
        <end position="167"/>
    </location>
</feature>
<feature type="strand" evidence="71">
    <location>
        <begin position="171"/>
        <end position="175"/>
    </location>
</feature>
<feature type="strand" evidence="71">
    <location>
        <begin position="177"/>
        <end position="179"/>
    </location>
</feature>
<feature type="helix" evidence="71">
    <location>
        <begin position="182"/>
        <end position="187"/>
    </location>
</feature>
<feature type="turn" evidence="71">
    <location>
        <begin position="188"/>
        <end position="190"/>
    </location>
</feature>
<feature type="strand" evidence="71">
    <location>
        <begin position="192"/>
        <end position="201"/>
    </location>
</feature>
<feature type="helix" evidence="71">
    <location>
        <begin position="218"/>
        <end position="220"/>
    </location>
</feature>
<feature type="strand" evidence="71">
    <location>
        <begin position="223"/>
        <end position="229"/>
    </location>
</feature>
<feature type="helix" evidence="71">
    <location>
        <begin position="235"/>
        <end position="253"/>
    </location>
</feature>
<feature type="strand" evidence="71">
    <location>
        <begin position="256"/>
        <end position="261"/>
    </location>
</feature>
<feature type="helix" evidence="71">
    <location>
        <begin position="264"/>
        <end position="266"/>
    </location>
</feature>
<feature type="helix" evidence="71">
    <location>
        <begin position="279"/>
        <end position="291"/>
    </location>
</feature>
<feature type="strand" evidence="71">
    <location>
        <begin position="296"/>
        <end position="299"/>
    </location>
</feature>
<feature type="helix" evidence="71">
    <location>
        <begin position="306"/>
        <end position="321"/>
    </location>
</feature>
<feature type="helix" evidence="71">
    <location>
        <begin position="335"/>
        <end position="338"/>
    </location>
</feature>
<feature type="turn" evidence="71">
    <location>
        <begin position="339"/>
        <end position="341"/>
    </location>
</feature>
<feature type="strand" evidence="68">
    <location>
        <begin position="343"/>
        <end position="345"/>
    </location>
</feature>
<feature type="helix" evidence="71">
    <location>
        <begin position="357"/>
        <end position="371"/>
    </location>
</feature>
<keyword id="KW-0002">3D-structure</keyword>
<keyword id="KW-0007">Acetylation</keyword>
<keyword id="KW-0025">Alternative splicing</keyword>
<keyword id="KW-0090">Biological rhythms</keyword>
<keyword id="KW-0156">Chromatin regulator</keyword>
<keyword id="KW-0963">Cytoplasm</keyword>
<keyword id="KW-0378">Hydrolase</keyword>
<keyword id="KW-1017">Isopeptide bond</keyword>
<keyword id="KW-0539">Nucleus</keyword>
<keyword id="KW-0597">Phosphoprotein</keyword>
<keyword id="KW-1267">Proteomics identification</keyword>
<keyword id="KW-1185">Reference proteome</keyword>
<keyword id="KW-0678">Repressor</keyword>
<keyword id="KW-0702">S-nitrosylation</keyword>
<keyword id="KW-0804">Transcription</keyword>
<keyword id="KW-0805">Transcription regulation</keyword>
<keyword id="KW-0832">Ubl conjugation</keyword>
<name>HDAC2_HUMAN</name>
<comment type="function">
    <text evidence="2 16 22 28 35 39 40 41 44 45">Histone deacetylase that catalyzes the deacetylation of lysine residues on the N-terminal part of the core histones (H2A, H2B, H3 and H4) (PubMed:28497810). Histone deacetylation gives a tag for epigenetic repression and plays an important role in transcriptional regulation, cell cycle progression and developmental events (By similarity). Histone deacetylases act via the formation of large multiprotein complexes (By similarity). Forms transcriptional repressor complexes by associating with MAD, SIN3, YY1 and N-COR (PubMed:12724404). Component of a RCOR/GFI/KDM1A/HDAC complex that suppresses, via histone deacetylase (HDAC) recruitment, a number of genes implicated in multilineage blood cell development (By similarity). Acts as a component of the histone deacetylase NuRD complex which participates in the remodeling of chromatin (PubMed:16428440, PubMed:28977666). Component of the SIN3B complex that represses transcription and counteracts the histone acetyltransferase activity of EP300 through the recognition H3K27ac marks by PHF12 and the activity of the histone deacetylase HDAC2 (PubMed:37137925). Also deacetylates non-histone targets: deacetylates TSHZ3, thereby regulating its transcriptional repressor activity (PubMed:19343227). May be involved in the transcriptional repression of circadian target genes, such as PER1, mediated by CRY1 through histone deacetylation (By similarity). Involved in MTA1-mediated transcriptional corepression of TFF1 and CDKN1A (PubMed:21965678). In addition to protein deacetylase activity, also acts as a protein-lysine deacylase by recognizing other acyl groups: catalyzes removal of (2E)-butenoyl (crotonyl), lactoyl (lactyl) and 2-hydroxyisobutanoyl (2-hydroxyisobutyryl) acyl groups from lysine residues, leading to protein decrotonylation, delactylation and de-2-hydroxyisobutyrylation, respectively (PubMed:28497810, PubMed:29192674, PubMed:35044827).</text>
</comment>
<comment type="catalytic activity">
    <reaction evidence="39">
        <text>N(6)-acetyl-L-lysyl-[histone] + H2O = L-lysyl-[histone] + acetate</text>
        <dbReference type="Rhea" id="RHEA:58196"/>
        <dbReference type="Rhea" id="RHEA-COMP:9845"/>
        <dbReference type="Rhea" id="RHEA-COMP:11338"/>
        <dbReference type="ChEBI" id="CHEBI:15377"/>
        <dbReference type="ChEBI" id="CHEBI:29969"/>
        <dbReference type="ChEBI" id="CHEBI:30089"/>
        <dbReference type="ChEBI" id="CHEBI:61930"/>
        <dbReference type="EC" id="3.5.1.98"/>
    </reaction>
    <physiologicalReaction direction="left-to-right" evidence="39">
        <dbReference type="Rhea" id="RHEA:58197"/>
    </physiologicalReaction>
</comment>
<comment type="catalytic activity">
    <reaction evidence="51">
        <text>N(6)-acetyl-L-lysyl-[protein] + H2O = L-lysyl-[protein] + acetate</text>
        <dbReference type="Rhea" id="RHEA:58108"/>
        <dbReference type="Rhea" id="RHEA-COMP:9752"/>
        <dbReference type="Rhea" id="RHEA-COMP:10731"/>
        <dbReference type="ChEBI" id="CHEBI:15377"/>
        <dbReference type="ChEBI" id="CHEBI:29969"/>
        <dbReference type="ChEBI" id="CHEBI:30089"/>
        <dbReference type="ChEBI" id="CHEBI:61930"/>
    </reaction>
    <physiologicalReaction direction="left-to-right" evidence="51">
        <dbReference type="Rhea" id="RHEA:58109"/>
    </physiologicalReaction>
</comment>
<comment type="catalytic activity">
    <reaction evidence="39">
        <text>N(6)-(2E)-butenoyl-L-lysyl-[protein] + H2O = (2E)-2-butenoate + L-lysyl-[protein]</text>
        <dbReference type="Rhea" id="RHEA:69172"/>
        <dbReference type="Rhea" id="RHEA-COMP:9752"/>
        <dbReference type="Rhea" id="RHEA-COMP:13707"/>
        <dbReference type="ChEBI" id="CHEBI:15377"/>
        <dbReference type="ChEBI" id="CHEBI:29969"/>
        <dbReference type="ChEBI" id="CHEBI:35899"/>
        <dbReference type="ChEBI" id="CHEBI:137954"/>
    </reaction>
    <physiologicalReaction direction="left-to-right" evidence="39">
        <dbReference type="Rhea" id="RHEA:69173"/>
    </physiologicalReaction>
</comment>
<comment type="catalytic activity">
    <reaction evidence="41">
        <text>N(6)-(2-hydroxyisobutanoyl)-L-lysyl-[protein] + H2O = 2-hydroxy-2-methylpropanoate + L-lysyl-[protein]</text>
        <dbReference type="Rhea" id="RHEA:69176"/>
        <dbReference type="Rhea" id="RHEA-COMP:9752"/>
        <dbReference type="Rhea" id="RHEA-COMP:15921"/>
        <dbReference type="ChEBI" id="CHEBI:15377"/>
        <dbReference type="ChEBI" id="CHEBI:19641"/>
        <dbReference type="ChEBI" id="CHEBI:29969"/>
        <dbReference type="ChEBI" id="CHEBI:144968"/>
    </reaction>
    <physiologicalReaction direction="left-to-right" evidence="41">
        <dbReference type="Rhea" id="RHEA:69177"/>
    </physiologicalReaction>
</comment>
<comment type="catalytic activity">
    <reaction evidence="44">
        <text>N(6)-[(S)-lactoyl]-L-lysyl-[protein] + H2O = (S)-lactate + L-lysyl-[protein]</text>
        <dbReference type="Rhea" id="RHEA:81387"/>
        <dbReference type="Rhea" id="RHEA-COMP:9752"/>
        <dbReference type="Rhea" id="RHEA-COMP:19466"/>
        <dbReference type="ChEBI" id="CHEBI:15377"/>
        <dbReference type="ChEBI" id="CHEBI:16651"/>
        <dbReference type="ChEBI" id="CHEBI:29969"/>
        <dbReference type="ChEBI" id="CHEBI:231527"/>
    </reaction>
    <physiologicalReaction direction="left-to-right" evidence="44">
        <dbReference type="Rhea" id="RHEA:81388"/>
    </physiologicalReaction>
</comment>
<comment type="cofactor">
    <cofactor evidence="45">
        <name>Zn(2+)</name>
        <dbReference type="ChEBI" id="CHEBI:29105"/>
    </cofactor>
</comment>
<comment type="cofactor">
    <cofactor>
        <name>Ca(2+)</name>
        <dbReference type="ChEBI" id="CHEBI:29108"/>
    </cofactor>
    <text evidence="45">Binds 2 Ca(2+) ions per subunit.</text>
</comment>
<comment type="activity regulation">
    <text evidence="1">Inositol tetraphosphate (1D-myo-inositol 1,4,5,6-tetrakisphosphate) may act as an intermolecular glue between HDAC2 and N-Cor repressor complex components.</text>
</comment>
<comment type="subunit">
    <text evidence="2 5 6 7 8 9 10 11 12 13 14 15 16 17 18 19 21 22 23 24 25 26 27 28 29 30 31 32 33 34 35 36 37 38 40 42 43 45 46 48">Part of the core histone deacetylase (HDAC) complex composed of HDAC1, HDAC2, RBBP4 and RBBP7, the core complex associates with SIN3, SAP18 and SAP30 to form the SIN3 HDAC complex (PubMed:10904264). Component of the nucleosome remodeling and deacetylase (NuRD) repressor complex, composed of core proteins MTA1, MTA2, MTA3, RBBP4, RBBP7, HDAC1, HDAC2, MBD2, MBD3, and peripherally associated proteins CDK2AP1, CDK2AP2, GATAD2A, GATAD2B, CHD3, CHD4 and CHD5 (PubMed:16428440, PubMed:25593309, PubMed:28977666, PubMed:33283408). The exact stoichiometry of the NuRD complex is unknown, and some subunits such as MBD2 and MBD3, GATAD2A and GATAD2B, and CHD3, CHD4 and CHD5 define mutually exclusive NuRD complexes (PubMed:16428440, PubMed:28977666, PubMed:33283408). Component of a RCOR/GFI/KDM1A/HDAC complex (By similarity). Component of a BHC histone deacetylase complex that contains HDAC1, HDAC2, HMG20B, KDM1A, RCOR1 and PHF21A (PubMed:12493763). The BHC complex may also contain ZMYM2, ZNF217, ZMYM3, GSE1 and GTF2I (PubMed:12493763). Part of a complex containing the core histones H2A, H2B, H3 and H4, DEK and unphosphorylated DAXX (PubMed:12140263). Part of a complex containing ATR and CHD4 (PubMed:10545197). Forms a heterologous complex at least with YY1 (PubMed:8917507). Interacts in the late S-phase of DNA-replication with DNMT1 in the other transcriptional repressor complex composed of DNMT1, DMAP1, PCNA, CAF1 (PubMed:10888872). Component of a mSin3A corepressor complex that contains SIN3A, SAP130, SUDS3, ARID4B, HDAC1 and HDAC2 (PubMed:12724404). Part of a complex composed of TRIM28, HDAC1, HDAC2 and EHMT2 (PubMed:10904264). Part of a complex containing at least CDYL, MIER1, MIER2, HDAC1 and HDAC2 (PubMed:19061646). Component of a histone deacetylase complex containing DNTTIP1, ZNF541, HDAC1 and HDAC2 (PubMed:21573134). Forms a complex comprising APPL1, RUVBL2, APPL2, CTNNB1 and HDAC1 (PubMed:19433865). Interacts directly with GFI1. Interacts directly with GFI1B (By similarity). Interacts with APEX1; the interaction is not dependent on the acetylated status of APEX1 (PubMed:14633989). Interacts with ATR (PubMed:10545197). Interacts with BCL6 (non-acetylated form) (PubMed:12402037, PubMed:18212045). Interacts with BEND3 (PubMed:21914818). Interacts with CBFA2T3 (PubMed:11533236). Interacts with CDK2AP1 (PubMed:20523938). Interacts with CHD4 (PubMed:25593309). Interacts with CHD5 (By similarity). Interacts with CHFR (PubMed:19182791). Interacts with CRY1 (By similarity). Interacts with DNMT1 (PubMed:10888872). Interacts with GATAD2A (PubMed:33283408). Interacts with HCFC1 (PubMed:12670868). Interacts with HDAC7 (By similarity). Interacts with HDAC10 (PubMed:11739383). Interacts with INSM1 (By similarity). Interacts with KDM4A (PubMed:15927959). Interacts with MACROH2A1 (via the non-histone region) (By similarity). Interacts with MBD3L2 (PubMed:15701600). Interacts with MTA1, with a preference for sumoylated MTA1 (PubMed:21965678, PubMed:24970816). Interacts with NACC2 (PubMed:22926524). Interacts with NRIP1 (PubMed:15060175). Interacts with PELP1 (PubMed:15456770). Interacts with PIMREG (PubMed:18757745). Interacts with PRDM6 (By similarity). Interacts with PWWP2B (By similarity). Interacts with SAP30 (By similarity). Interacts with SAP30L (PubMed:16820529). Interacts with SETDB1 (By similarity). Interacts with SIX3 (By similarity). Interacts with SMARCAD1 (PubMed:21549307). Interacts with SNW1 (PubMed:10644367). Interacts with SPHK2 (PubMed:19729656). Interacts with SPEN/MINT (PubMed:11331609). Interacts (CK2 phosphorylated form) with SP3 (PubMed:12176973). Interacts with SUV39H1 (By similarity). Interacts with TSHZ3 (via its N-terminus) (PubMed:19343227). Interacts with ZMYND8 (PubMed:25593309). Interacts with ZNF431 (By similarity). Interacts with ZNF263; recruited to the SIX3 promoter along with other proteins involved in chromatin modification and transcriptional corepression where it contributes to transcriptional repression (PubMed:32051553). Identified in a complex with HDAC1, KCTD19, DNTTIP1 and ZNF541 (By similarity). Component of the SIN3B complex, which includes SIN3B, HDAC2, PHF12 and MORF4L1; interacts directly with all subunits (PubMed:37137925).</text>
</comment>
<comment type="interaction">
    <interactant intactId="EBI-301821">
        <id>Q92769</id>
    </interactant>
    <interactant intactId="EBI-6597578">
        <id>Q9C0K0</id>
        <label>BCL11B</label>
    </interactant>
    <organismsDiffer>false</organismsDiffer>
    <experiments>5</experiments>
</comment>
<comment type="interaction">
    <interactant intactId="EBI-301821">
        <id>Q92769</id>
    </interactant>
    <interactant intactId="EBI-714781">
        <id>Q9HCU9</id>
        <label>BRMS1</label>
    </interactant>
    <organismsDiffer>false</organismsDiffer>
    <experiments>4</experiments>
</comment>
<comment type="interaction">
    <interactant intactId="EBI-301821">
        <id>Q92769</id>
    </interactant>
    <interactant intactId="EBI-347804">
        <id>P68400</id>
        <label>CSNK2A1</label>
    </interactant>
    <organismsDiffer>false</organismsDiffer>
    <experiments>3</experiments>
</comment>
<comment type="interaction">
    <interactant intactId="EBI-301821">
        <id>Q92769</id>
    </interactant>
    <interactant intactId="EBI-77321">
        <id>Q9UER7</id>
        <label>DAXX</label>
    </interactant>
    <organismsDiffer>false</organismsDiffer>
    <experiments>2</experiments>
</comment>
<comment type="interaction">
    <interactant intactId="EBI-301821">
        <id>Q92769</id>
    </interactant>
    <interactant intactId="EBI-396176">
        <id>P51610</id>
        <label>HCFC1</label>
    </interactant>
    <organismsDiffer>false</organismsDiffer>
    <experiments>2</experiments>
</comment>
<comment type="interaction">
    <interactant intactId="EBI-301821">
        <id>Q92769</id>
    </interactant>
    <interactant intactId="EBI-301834">
        <id>Q13547</id>
        <label>HDAC1</label>
    </interactant>
    <organismsDiffer>false</organismsDiffer>
    <experiments>21</experiments>
</comment>
<comment type="interaction">
    <interactant intactId="EBI-301821">
        <id>Q92769</id>
    </interactant>
    <interactant intactId="EBI-867196">
        <id>Q9UIS9</id>
        <label>MBD1</label>
    </interactant>
    <organismsDiffer>false</organismsDiffer>
    <experiments>2</experiments>
</comment>
<comment type="interaction">
    <interactant intactId="EBI-301821">
        <id>Q92769</id>
    </interactant>
    <interactant intactId="EBI-714236">
        <id>Q13330</id>
        <label>MTA1</label>
    </interactant>
    <organismsDiffer>false</organismsDiffer>
    <experiments>7</experiments>
</comment>
<comment type="interaction">
    <interactant intactId="EBI-301821">
        <id>Q92769</id>
    </interactant>
    <interactant intactId="EBI-447544">
        <id>P01106</id>
        <label>MYC</label>
    </interactant>
    <organismsDiffer>false</organismsDiffer>
    <experiments>2</experiments>
</comment>
<comment type="interaction">
    <interactant intactId="EBI-301821">
        <id>Q92769</id>
    </interactant>
    <interactant intactId="EBI-78579">
        <id>P06748</id>
        <label>NPM1</label>
    </interactant>
    <organismsDiffer>false</organismsDiffer>
    <experiments>2</experiments>
</comment>
<comment type="interaction">
    <interactant intactId="EBI-301821">
        <id>Q92769</id>
    </interactant>
    <interactant intactId="EBI-923266">
        <id>P48382</id>
        <label>RFX5</label>
    </interactant>
    <organismsDiffer>false</organismsDiffer>
    <experiments>4</experiments>
</comment>
<comment type="interaction">
    <interactant intactId="EBI-301821">
        <id>Q92769</id>
    </interactant>
    <interactant intactId="EBI-347218">
        <id>Q96ST3</id>
        <label>SIN3A</label>
    </interactant>
    <organismsDiffer>false</organismsDiffer>
    <experiments>7</experiments>
</comment>
<comment type="interaction">
    <interactant intactId="EBI-301821">
        <id>Q92769</id>
    </interactant>
    <interactant intactId="EBI-1045459">
        <id>O95863</id>
        <label>SNAI1</label>
    </interactant>
    <organismsDiffer>false</organismsDiffer>
    <experiments>2</experiments>
</comment>
<comment type="interaction">
    <interactant intactId="EBI-301821">
        <id>Q92769</id>
    </interactant>
    <interactant intactId="EBI-727136">
        <id>Q9HD15</id>
        <label>SRA1</label>
    </interactant>
    <organismsDiffer>false</organismsDiffer>
    <experiments>2</experiments>
</comment>
<comment type="interaction">
    <interactant intactId="EBI-301821">
        <id>Q92769</id>
    </interactant>
    <interactant intactId="EBI-349968">
        <id>O43463</id>
        <label>SUV39H1</label>
    </interactant>
    <organismsDiffer>false</organismsDiffer>
    <experiments>3</experiments>
</comment>
<comment type="interaction">
    <interactant intactId="EBI-301821">
        <id>Q92769</id>
    </interactant>
    <interactant intactId="EBI-1369170">
        <id>Q9H3M7</id>
        <label>TXNIP</label>
    </interactant>
    <organismsDiffer>false</organismsDiffer>
    <experiments>3</experiments>
</comment>
<comment type="interaction">
    <interactant intactId="EBI-301821">
        <id>Q92769</id>
    </interactant>
    <interactant intactId="EBI-2799490">
        <id>Q92618</id>
        <label>ZNF516</label>
    </interactant>
    <organismsDiffer>false</organismsDiffer>
    <experiments>7</experiments>
</comment>
<comment type="interaction">
    <interactant intactId="EBI-301821">
        <id>Q92769</id>
    </interactant>
    <interactant intactId="EBI-5564776">
        <id>Q17R98</id>
        <label>ZNF827</label>
    </interactant>
    <organismsDiffer>false</organismsDiffer>
    <experiments>2</experiments>
</comment>
<comment type="interaction">
    <interactant intactId="EBI-301821">
        <id>Q92769</id>
    </interactant>
    <interactant intactId="EBI-9006943">
        <id>Q2HR82</id>
        <label>K8</label>
    </interactant>
    <organismsDiffer>true</organismsDiffer>
    <experiments>7</experiments>
</comment>
<comment type="interaction">
    <interactant intactId="EBI-301821">
        <id>Q92769</id>
    </interactant>
    <interactant intactId="EBI-25475864">
        <id>PRO_0000449623</id>
        <label>rep</label>
        <dbReference type="UniProtKB" id="P0DTD1"/>
    </interactant>
    <organismsDiffer>true</organismsDiffer>
    <experiments>2</experiments>
</comment>
<comment type="subcellular location">
    <subcellularLocation>
        <location evidence="31 37 40 43">Nucleus</location>
    </subcellularLocation>
    <subcellularLocation>
        <location evidence="37">Cytoplasm</location>
    </subcellularLocation>
</comment>
<comment type="alternative products">
    <event type="alternative splicing"/>
    <isoform>
        <id>Q92769-1</id>
        <name>1</name>
        <sequence type="displayed"/>
    </isoform>
    <isoform>
        <id>Q92769-3</id>
        <name>2</name>
        <sequence type="described" ref="VSP_056175"/>
    </isoform>
</comment>
<comment type="tissue specificity">
    <text>Widely expressed; lower levels in brain and lung.</text>
</comment>
<comment type="PTM">
    <text evidence="2">S-nitrosylated by GAPDH. In neurons, S-nitrosylation at Cys-262 and Cys-274 does not affect enzyme activity, but induces HDAC2 release from chromatin. This in turn increases acetylation of histones surrounding neurotrophin-dependent gene promoters and promotes their transcription. In embryonic cortical neurons, S-Nitrosylation regulates dendritic growth and branching.</text>
</comment>
<comment type="similarity">
    <text evidence="50">Belongs to the histone deacetylase family. HD type 1 subfamily.</text>
</comment>
<comment type="sequence caution" evidence="50">
    <conflict type="erroneous initiation">
        <sequence resource="EMBL-CDS" id="AAH31055"/>
    </conflict>
    <text>Extended N-terminus.</text>
</comment>
<comment type="sequence caution" evidence="50">
    <conflict type="erroneous initiation">
        <sequence resource="EMBL-CDS" id="BAG59420"/>
    </conflict>
    <text>Extended N-terminus.</text>
</comment>
<comment type="online information" name="Atlas of Genetics and Cytogenetics in Oncology and Haematology">
    <link uri="https://atlasgeneticsoncology.org/gene/40803/hdac2"/>
</comment>
<protein>
    <recommendedName>
        <fullName evidence="50">Histone deacetylase 2</fullName>
        <shortName>HD2</shortName>
        <ecNumber evidence="39">3.5.1.98</ecNumber>
    </recommendedName>
    <alternativeName>
        <fullName evidence="50">Protein deacylase HDAC2</fullName>
        <ecNumber evidence="39 41 44">3.5.1.-</ecNumber>
    </alternativeName>
</protein>
<dbReference type="EC" id="3.5.1.98" evidence="39"/>
<dbReference type="EC" id="3.5.1.-" evidence="39 41 44"/>
<dbReference type="EMBL" id="U31814">
    <property type="protein sequence ID" value="AAC50814.1"/>
    <property type="molecule type" value="mRNA"/>
</dbReference>
<dbReference type="EMBL" id="AK092156">
    <property type="protein sequence ID" value="BAG52487.1"/>
    <property type="molecule type" value="mRNA"/>
</dbReference>
<dbReference type="EMBL" id="AK296856">
    <property type="protein sequence ID" value="BAG59420.1"/>
    <property type="status" value="ALT_INIT"/>
    <property type="molecule type" value="mRNA"/>
</dbReference>
<dbReference type="EMBL" id="AL590398">
    <property type="status" value="NOT_ANNOTATED_CDS"/>
    <property type="molecule type" value="Genomic_DNA"/>
</dbReference>
<dbReference type="EMBL" id="AL671967">
    <property type="status" value="NOT_ANNOTATED_CDS"/>
    <property type="molecule type" value="Genomic_DNA"/>
</dbReference>
<dbReference type="EMBL" id="FO393415">
    <property type="status" value="NOT_ANNOTATED_CDS"/>
    <property type="molecule type" value="Genomic_DNA"/>
</dbReference>
<dbReference type="EMBL" id="CH471051">
    <property type="protein sequence ID" value="EAW48252.1"/>
    <property type="molecule type" value="Genomic_DNA"/>
</dbReference>
<dbReference type="EMBL" id="CH471051">
    <property type="protein sequence ID" value="EAW48253.1"/>
    <property type="molecule type" value="Genomic_DNA"/>
</dbReference>
<dbReference type="EMBL" id="CH471051">
    <property type="protein sequence ID" value="EAW48254.1"/>
    <property type="molecule type" value="Genomic_DNA"/>
</dbReference>
<dbReference type="EMBL" id="CH471051">
    <property type="protein sequence ID" value="EAW48255.1"/>
    <property type="molecule type" value="Genomic_DNA"/>
</dbReference>
<dbReference type="EMBL" id="BC031055">
    <property type="protein sequence ID" value="AAH31055.2"/>
    <property type="status" value="ALT_INIT"/>
    <property type="molecule type" value="mRNA"/>
</dbReference>
<dbReference type="CCDS" id="CCDS43493.2">
    <molecule id="Q92769-1"/>
</dbReference>
<dbReference type="RefSeq" id="NP_001518.3">
    <molecule id="Q92769-1"/>
    <property type="nucleotide sequence ID" value="NM_001527.4"/>
</dbReference>
<dbReference type="RefSeq" id="XP_011534090.1">
    <property type="nucleotide sequence ID" value="XM_011535788.1"/>
</dbReference>
<dbReference type="RefSeq" id="XP_016866288.1">
    <property type="nucleotide sequence ID" value="XM_017010799.1"/>
</dbReference>
<dbReference type="RefSeq" id="XP_047274648.1">
    <molecule id="Q92769-3"/>
    <property type="nucleotide sequence ID" value="XM_047418692.1"/>
</dbReference>
<dbReference type="RefSeq" id="XP_054211242.1">
    <molecule id="Q92769-3"/>
    <property type="nucleotide sequence ID" value="XM_054355267.1"/>
</dbReference>
<dbReference type="PDB" id="3MAX">
    <property type="method" value="X-ray"/>
    <property type="resolution" value="2.05 A"/>
    <property type="chains" value="A/B/C=9-374"/>
</dbReference>
<dbReference type="PDB" id="4LXZ">
    <property type="method" value="X-ray"/>
    <property type="resolution" value="1.85 A"/>
    <property type="chains" value="A/B/C=8-376"/>
</dbReference>
<dbReference type="PDB" id="4LY1">
    <property type="method" value="X-ray"/>
    <property type="resolution" value="1.57 A"/>
    <property type="chains" value="A/B/C=8-376"/>
</dbReference>
<dbReference type="PDB" id="5IWG">
    <property type="method" value="X-ray"/>
    <property type="resolution" value="1.66 A"/>
    <property type="chains" value="A/B/C=8-375"/>
</dbReference>
<dbReference type="PDB" id="5IX0">
    <property type="method" value="X-ray"/>
    <property type="resolution" value="1.72 A"/>
    <property type="chains" value="A/B/C=7-375"/>
</dbReference>
<dbReference type="PDB" id="6G3O">
    <property type="method" value="X-ray"/>
    <property type="resolution" value="2.27 A"/>
    <property type="chains" value="A/B/C=7-376"/>
</dbReference>
<dbReference type="PDB" id="6WBW">
    <property type="method" value="X-ray"/>
    <property type="resolution" value="1.46 A"/>
    <property type="chains" value="A/B/C=1-376"/>
</dbReference>
<dbReference type="PDB" id="6WBZ">
    <property type="method" value="X-ray"/>
    <property type="resolution" value="1.32 A"/>
    <property type="chains" value="A/B/C=1-376"/>
</dbReference>
<dbReference type="PDB" id="6WHN">
    <property type="method" value="X-ray"/>
    <property type="resolution" value="1.54 A"/>
    <property type="chains" value="A/B/C=2-385"/>
</dbReference>
<dbReference type="PDB" id="6WHO">
    <property type="method" value="X-ray"/>
    <property type="resolution" value="2.20 A"/>
    <property type="chains" value="A/B/C=2-385"/>
</dbReference>
<dbReference type="PDB" id="6WHQ">
    <property type="method" value="X-ray"/>
    <property type="resolution" value="2.35 A"/>
    <property type="chains" value="A/B/C=2-385"/>
</dbReference>
<dbReference type="PDB" id="6WHZ">
    <property type="method" value="X-ray"/>
    <property type="resolution" value="2.90 A"/>
    <property type="chains" value="A/B/C=2-385"/>
</dbReference>
<dbReference type="PDB" id="6WI3">
    <property type="method" value="X-ray"/>
    <property type="resolution" value="2.35 A"/>
    <property type="chains" value="A/B/C=2-385"/>
</dbReference>
<dbReference type="PDB" id="6XDM">
    <property type="method" value="X-ray"/>
    <property type="resolution" value="1.56 A"/>
    <property type="chains" value="A/B/C=1-376"/>
</dbReference>
<dbReference type="PDB" id="6XEB">
    <property type="method" value="X-ray"/>
    <property type="resolution" value="1.50 A"/>
    <property type="chains" value="A/B/C=1-376"/>
</dbReference>
<dbReference type="PDB" id="6XEC">
    <property type="method" value="X-ray"/>
    <property type="resolution" value="1.70 A"/>
    <property type="chains" value="A/B/C=1-376"/>
</dbReference>
<dbReference type="PDB" id="7JS8">
    <property type="method" value="X-ray"/>
    <property type="resolution" value="1.63 A"/>
    <property type="chains" value="A/B/C=1-376"/>
</dbReference>
<dbReference type="PDB" id="7KBG">
    <property type="method" value="X-ray"/>
    <property type="resolution" value="1.26 A"/>
    <property type="chains" value="A/B/C=1-376"/>
</dbReference>
<dbReference type="PDB" id="7KBH">
    <property type="method" value="X-ray"/>
    <property type="resolution" value="2.68 A"/>
    <property type="chains" value="A/B/C=1-376"/>
</dbReference>
<dbReference type="PDB" id="7LTG">
    <property type="method" value="X-ray"/>
    <property type="resolution" value="1.80 A"/>
    <property type="chains" value="A/B/C=1-376"/>
</dbReference>
<dbReference type="PDB" id="7LTK">
    <property type="method" value="X-ray"/>
    <property type="resolution" value="1.59 A"/>
    <property type="chains" value="A/B/C=1-376"/>
</dbReference>
<dbReference type="PDB" id="7LTL">
    <property type="method" value="X-ray"/>
    <property type="resolution" value="1.49 A"/>
    <property type="chains" value="A/B/C=1-376"/>
</dbReference>
<dbReference type="PDB" id="7MOS">
    <property type="method" value="X-ray"/>
    <property type="resolution" value="1.70 A"/>
    <property type="chains" value="A/B/C=1-376"/>
</dbReference>
<dbReference type="PDB" id="7MOT">
    <property type="method" value="X-ray"/>
    <property type="resolution" value="1.54 A"/>
    <property type="chains" value="A/B/C=1-376"/>
</dbReference>
<dbReference type="PDB" id="7MOX">
    <property type="method" value="X-ray"/>
    <property type="resolution" value="1.69 A"/>
    <property type="chains" value="A/B/C=1-376"/>
</dbReference>
<dbReference type="PDB" id="7MOY">
    <property type="method" value="X-ray"/>
    <property type="resolution" value="1.78 A"/>
    <property type="chains" value="A/B/C=1-376"/>
</dbReference>
<dbReference type="PDB" id="7MOZ">
    <property type="method" value="X-ray"/>
    <property type="resolution" value="1.54 A"/>
    <property type="chains" value="A/B/C=1-376"/>
</dbReference>
<dbReference type="PDB" id="7ZZO">
    <property type="method" value="X-ray"/>
    <property type="resolution" value="2.00 A"/>
    <property type="chains" value="A/B/C=1-488"/>
</dbReference>
<dbReference type="PDB" id="7ZZP">
    <property type="method" value="X-ray"/>
    <property type="resolution" value="1.52 A"/>
    <property type="chains" value="A/B/C=1-488"/>
</dbReference>
<dbReference type="PDB" id="7ZZR">
    <property type="method" value="X-ray"/>
    <property type="resolution" value="2.17 A"/>
    <property type="chains" value="A/B/C=1-488"/>
</dbReference>
<dbReference type="PDB" id="7ZZS">
    <property type="method" value="X-ray"/>
    <property type="resolution" value="1.88 A"/>
    <property type="chains" value="A/B/C=1-488"/>
</dbReference>
<dbReference type="PDB" id="7ZZT">
    <property type="method" value="X-ray"/>
    <property type="resolution" value="1.56 A"/>
    <property type="chains" value="A/B/C=1-488"/>
</dbReference>
<dbReference type="PDB" id="7ZZU">
    <property type="method" value="X-ray"/>
    <property type="resolution" value="1.85 A"/>
    <property type="chains" value="A/B/C=1-488"/>
</dbReference>
<dbReference type="PDB" id="7ZZW">
    <property type="method" value="X-ray"/>
    <property type="resolution" value="1.73 A"/>
    <property type="chains" value="A/B/C=1-488"/>
</dbReference>
<dbReference type="PDB" id="8A0B">
    <property type="method" value="X-ray"/>
    <property type="resolution" value="1.75 A"/>
    <property type="chains" value="A/B/C=1-488"/>
</dbReference>
<dbReference type="PDB" id="8BPA">
    <property type="method" value="EM"/>
    <property type="resolution" value="3.70 A"/>
    <property type="chains" value="B=1-488"/>
</dbReference>
<dbReference type="PDB" id="8BPB">
    <property type="method" value="EM"/>
    <property type="resolution" value="2.80 A"/>
    <property type="chains" value="B=1-488"/>
</dbReference>
<dbReference type="PDB" id="8BPC">
    <property type="method" value="EM"/>
    <property type="resolution" value="2.80 A"/>
    <property type="chains" value="B=1-488"/>
</dbReference>
<dbReference type="PDB" id="8C60">
    <property type="method" value="EM"/>
    <property type="resolution" value="3.40 A"/>
    <property type="chains" value="B=1-488"/>
</dbReference>
<dbReference type="PDB" id="9DTQ">
    <property type="method" value="EM"/>
    <property type="resolution" value="2.87 A"/>
    <property type="chains" value="A=2-488"/>
</dbReference>
<dbReference type="PDBsum" id="3MAX"/>
<dbReference type="PDBsum" id="4LXZ"/>
<dbReference type="PDBsum" id="4LY1"/>
<dbReference type="PDBsum" id="5IWG"/>
<dbReference type="PDBsum" id="5IX0"/>
<dbReference type="PDBsum" id="6G3O"/>
<dbReference type="PDBsum" id="6WBW"/>
<dbReference type="PDBsum" id="6WBZ"/>
<dbReference type="PDBsum" id="6WHN"/>
<dbReference type="PDBsum" id="6WHO"/>
<dbReference type="PDBsum" id="6WHQ"/>
<dbReference type="PDBsum" id="6WHZ"/>
<dbReference type="PDBsum" id="6WI3"/>
<dbReference type="PDBsum" id="6XDM"/>
<dbReference type="PDBsum" id="6XEB"/>
<dbReference type="PDBsum" id="6XEC"/>
<dbReference type="PDBsum" id="7JS8"/>
<dbReference type="PDBsum" id="7KBG"/>
<dbReference type="PDBsum" id="7KBH"/>
<dbReference type="PDBsum" id="7LTG"/>
<dbReference type="PDBsum" id="7LTK"/>
<dbReference type="PDBsum" id="7LTL"/>
<dbReference type="PDBsum" id="7MOS"/>
<dbReference type="PDBsum" id="7MOT"/>
<dbReference type="PDBsum" id="7MOX"/>
<dbReference type="PDBsum" id="7MOY"/>
<dbReference type="PDBsum" id="7MOZ"/>
<dbReference type="PDBsum" id="7ZZO"/>
<dbReference type="PDBsum" id="7ZZP"/>
<dbReference type="PDBsum" id="7ZZR"/>
<dbReference type="PDBsum" id="7ZZS"/>
<dbReference type="PDBsum" id="7ZZT"/>
<dbReference type="PDBsum" id="7ZZU"/>
<dbReference type="PDBsum" id="7ZZW"/>
<dbReference type="PDBsum" id="8A0B"/>
<dbReference type="PDBsum" id="8BPA"/>
<dbReference type="PDBsum" id="8BPB"/>
<dbReference type="PDBsum" id="8BPC"/>
<dbReference type="PDBsum" id="8C60"/>
<dbReference type="PDBsum" id="9DTQ"/>
<dbReference type="EMDB" id="EMD-16147"/>
<dbReference type="EMDB" id="EMD-16148"/>
<dbReference type="EMDB" id="EMD-16149"/>
<dbReference type="EMDB" id="EMD-16449"/>
<dbReference type="EMDB" id="EMD-47156"/>
<dbReference type="SMR" id="Q92769"/>
<dbReference type="BioGRID" id="109316">
    <property type="interactions" value="852"/>
</dbReference>
<dbReference type="ComplexPortal" id="CPX-2867">
    <property type="entry name" value="MiDAC histone deacetylase complex, HDAC2 variant"/>
</dbReference>
<dbReference type="ComplexPortal" id="CPX-3321">
    <property type="entry name" value="SIN3A histone deacetylase complex"/>
</dbReference>
<dbReference type="ComplexPortal" id="CPX-3322">
    <property type="entry name" value="SIN3B histone deacetylase complex"/>
</dbReference>
<dbReference type="ComplexPortal" id="CPX-3323">
    <property type="entry name" value="SIN3A histone deacetylase complex, ES cell-specific variant"/>
</dbReference>
<dbReference type="ComplexPortal" id="CPX-880">
    <property type="entry name" value="MBD2/NuRD nucleosome remodeling and deacetylase complex"/>
</dbReference>
<dbReference type="ComplexPortal" id="CPX-9065">
    <property type="entry name" value="CoREST transcriptional corepressor complex, RCOR1-HDAC2 variant"/>
</dbReference>
<dbReference type="ComplexPortal" id="CPX-9067">
    <property type="entry name" value="CoREST transcriptional corepressor complex, RCOR2-HDAC2 variant"/>
</dbReference>
<dbReference type="ComplexPortal" id="CPX-9069">
    <property type="entry name" value="CoREST transcriptional corepressor complex, RCOR3-HDAC2 variant"/>
</dbReference>
<dbReference type="ComplexPortal" id="CPX-9162">
    <property type="entry name" value="MIER1 histone deacetylase complex, HDAC2 variant"/>
</dbReference>
<dbReference type="ComplexPortal" id="CPX-9167">
    <property type="entry name" value="MIER2 histone deacetylase complex, HDAC2 variant"/>
</dbReference>
<dbReference type="ComplexPortal" id="CPX-922">
    <property type="entry name" value="MBD3/NuRD nucleosome remodeling and deacetylase complex"/>
</dbReference>
<dbReference type="CORUM" id="Q92769"/>
<dbReference type="DIP" id="DIP-24220N"/>
<dbReference type="FunCoup" id="Q92769">
    <property type="interactions" value="4009"/>
</dbReference>
<dbReference type="IntAct" id="Q92769">
    <property type="interactions" value="283"/>
</dbReference>
<dbReference type="MINT" id="Q92769"/>
<dbReference type="STRING" id="9606.ENSP00000430432"/>
<dbReference type="BindingDB" id="Q92769"/>
<dbReference type="ChEMBL" id="CHEMBL1937"/>
<dbReference type="DrugBank" id="DB07553">
    <property type="generic name" value="9,9,9-TRIFLUORO-8-OXO-N-PHENYLNONANAMIDE"/>
</dbReference>
<dbReference type="DrugBank" id="DB12565">
    <property type="generic name" value="Abexinostat"/>
</dbReference>
<dbReference type="DrugBank" id="DB01223">
    <property type="generic name" value="Aminophylline"/>
</dbReference>
<dbReference type="DrugBank" id="DB01076">
    <property type="generic name" value="Atorvastatin"/>
</dbReference>
<dbReference type="DrugBank" id="DB05015">
    <property type="generic name" value="Belinostat"/>
</dbReference>
<dbReference type="DrugBank" id="DB01262">
    <property type="generic name" value="Decitabine"/>
</dbReference>
<dbReference type="DrugBank" id="DB11841">
    <property type="generic name" value="Entinostat"/>
</dbReference>
<dbReference type="DrugBank" id="DB01095">
    <property type="generic name" value="Fluvastatin"/>
</dbReference>
<dbReference type="DrugBank" id="DB12645">
    <property type="generic name" value="Givinostat"/>
</dbReference>
<dbReference type="DrugBank" id="DB00227">
    <property type="generic name" value="Lovastatin"/>
</dbReference>
<dbReference type="DrugBank" id="DB14979">
    <property type="generic name" value="Martinostat"/>
</dbReference>
<dbReference type="DrugBank" id="DB11830">
    <property type="generic name" value="Mocetinostat"/>
</dbReference>
<dbReference type="DrugBank" id="DB01303">
    <property type="generic name" value="Oxtriphylline"/>
</dbReference>
<dbReference type="DrugBank" id="DB06603">
    <property type="generic name" value="Panobinostat"/>
</dbReference>
<dbReference type="DrugBank" id="DB06819">
    <property type="generic name" value="Phenylbutyric acid"/>
</dbReference>
<dbReference type="DrugBank" id="DB05223">
    <property type="generic name" value="Pracinostat"/>
</dbReference>
<dbReference type="DrugBank" id="DB00175">
    <property type="generic name" value="Pravastatin"/>
</dbReference>
<dbReference type="DrugBank" id="DB03766">
    <property type="generic name" value="Propanoic acid"/>
</dbReference>
<dbReference type="DrugBank" id="DB12847">
    <property type="generic name" value="Pyroxamide"/>
</dbReference>
<dbReference type="DrugBank" id="DB06176">
    <property type="generic name" value="Romidepsin"/>
</dbReference>
<dbReference type="DrugBank" id="DB00641">
    <property type="generic name" value="Simvastatin"/>
</dbReference>
<dbReference type="DrugBank" id="DB00277">
    <property type="generic name" value="Theophylline"/>
</dbReference>
<dbReference type="DrugBank" id="DB09091">
    <property type="generic name" value="Tixocortol"/>
</dbReference>
<dbReference type="DrugBank" id="DB00313">
    <property type="generic name" value="Valproic acid"/>
</dbReference>
<dbReference type="DrugBank" id="DB02546">
    <property type="generic name" value="Vorinostat"/>
</dbReference>
<dbReference type="DrugCentral" id="Q92769"/>
<dbReference type="GuidetoPHARMACOLOGY" id="2616"/>
<dbReference type="GlyGen" id="Q92769">
    <property type="glycosylation" value="4 sites, 1 N-linked glycan (1 site), 1 O-linked glycan (2 sites)"/>
</dbReference>
<dbReference type="iPTMnet" id="Q92769"/>
<dbReference type="MetOSite" id="Q92769"/>
<dbReference type="PhosphoSitePlus" id="Q92769"/>
<dbReference type="SwissPalm" id="Q92769"/>
<dbReference type="BioMuta" id="HDAC2"/>
<dbReference type="DMDM" id="68068066"/>
<dbReference type="jPOST" id="Q92769"/>
<dbReference type="MassIVE" id="Q92769"/>
<dbReference type="PaxDb" id="9606-ENSP00000430432"/>
<dbReference type="PeptideAtlas" id="Q92769"/>
<dbReference type="ProteomicsDB" id="3614"/>
<dbReference type="ProteomicsDB" id="75454">
    <molecule id="Q92769-1"/>
</dbReference>
<dbReference type="Pumba" id="Q92769"/>
<dbReference type="Antibodypedia" id="1842">
    <property type="antibodies" value="1034 antibodies from 50 providers"/>
</dbReference>
<dbReference type="DNASU" id="3066"/>
<dbReference type="Ensembl" id="ENST00000368632.6">
    <molecule id="Q92769-3"/>
    <property type="protein sequence ID" value="ENSP00000357621.2"/>
    <property type="gene ID" value="ENSG00000196591.12"/>
</dbReference>
<dbReference type="Ensembl" id="ENST00000519065.6">
    <molecule id="Q92769-1"/>
    <property type="protein sequence ID" value="ENSP00000430432.1"/>
    <property type="gene ID" value="ENSG00000196591.12"/>
</dbReference>
<dbReference type="Ensembl" id="ENST00000519108.5">
    <molecule id="Q92769-3"/>
    <property type="protein sequence ID" value="ENSP00000430008.1"/>
    <property type="gene ID" value="ENSG00000196591.12"/>
</dbReference>
<dbReference type="GeneID" id="3066"/>
<dbReference type="KEGG" id="hsa:3066"/>
<dbReference type="MANE-Select" id="ENST00000519065.6">
    <property type="protein sequence ID" value="ENSP00000430432.1"/>
    <property type="RefSeq nucleotide sequence ID" value="NM_001527.4"/>
    <property type="RefSeq protein sequence ID" value="NP_001518.3"/>
</dbReference>
<dbReference type="UCSC" id="uc003pwc.3">
    <molecule id="Q92769-1"/>
    <property type="organism name" value="human"/>
</dbReference>
<dbReference type="AGR" id="HGNC:4853"/>
<dbReference type="CTD" id="3066"/>
<dbReference type="DisGeNET" id="3066"/>
<dbReference type="GeneCards" id="HDAC2"/>
<dbReference type="HGNC" id="HGNC:4853">
    <property type="gene designation" value="HDAC2"/>
</dbReference>
<dbReference type="HPA" id="ENSG00000196591">
    <property type="expression patterns" value="Low tissue specificity"/>
</dbReference>
<dbReference type="MalaCards" id="HDAC2"/>
<dbReference type="MIM" id="605164">
    <property type="type" value="gene"/>
</dbReference>
<dbReference type="neXtProt" id="NX_Q92769"/>
<dbReference type="OpenTargets" id="ENSG00000196591"/>
<dbReference type="PharmGKB" id="PA29227"/>
<dbReference type="VEuPathDB" id="HostDB:ENSG00000196591"/>
<dbReference type="eggNOG" id="KOG1342">
    <property type="taxonomic scope" value="Eukaryota"/>
</dbReference>
<dbReference type="GeneTree" id="ENSGT00940000155725"/>
<dbReference type="HOGENOM" id="CLU_007727_7_4_1"/>
<dbReference type="InParanoid" id="Q92769"/>
<dbReference type="OMA" id="GKIMEWY"/>
<dbReference type="OrthoDB" id="1918432at2759"/>
<dbReference type="PAN-GO" id="Q92769">
    <property type="GO annotations" value="3 GO annotations based on evolutionary models"/>
</dbReference>
<dbReference type="PhylomeDB" id="Q92769"/>
<dbReference type="TreeFam" id="TF106171"/>
<dbReference type="BRENDA" id="3.5.1.98">
    <property type="organism ID" value="2681"/>
</dbReference>
<dbReference type="PathwayCommons" id="Q92769"/>
<dbReference type="Reactome" id="R-HSA-193670">
    <property type="pathway name" value="p75NTR negatively regulates cell cycle via SC1"/>
</dbReference>
<dbReference type="Reactome" id="R-HSA-2122947">
    <property type="pathway name" value="NOTCH1 Intracellular Domain Regulates Transcription"/>
</dbReference>
<dbReference type="Reactome" id="R-HSA-2644606">
    <property type="pathway name" value="Constitutive Signaling by NOTCH1 PEST Domain Mutants"/>
</dbReference>
<dbReference type="Reactome" id="R-HSA-2894862">
    <property type="pathway name" value="Constitutive Signaling by NOTCH1 HD+PEST Domain Mutants"/>
</dbReference>
<dbReference type="Reactome" id="R-HSA-3214815">
    <property type="pathway name" value="HDACs deacetylate histones"/>
</dbReference>
<dbReference type="Reactome" id="R-HSA-350054">
    <property type="pathway name" value="Notch-HLH transcription pathway"/>
</dbReference>
<dbReference type="Reactome" id="R-HSA-427389">
    <property type="pathway name" value="ERCC6 (CSB) and EHMT2 (G9a) positively regulate rRNA expression"/>
</dbReference>
<dbReference type="Reactome" id="R-HSA-427413">
    <property type="pathway name" value="NoRC negatively regulates rRNA expression"/>
</dbReference>
<dbReference type="Reactome" id="R-HSA-4551638">
    <property type="pathway name" value="SUMOylation of chromatin organization proteins"/>
</dbReference>
<dbReference type="Reactome" id="R-HSA-6804758">
    <property type="pathway name" value="Regulation of TP53 Activity through Acetylation"/>
</dbReference>
<dbReference type="Reactome" id="R-HSA-73762">
    <property type="pathway name" value="RNA Polymerase I Transcription Initiation"/>
</dbReference>
<dbReference type="Reactome" id="R-HSA-8943724">
    <property type="pathway name" value="Regulation of PTEN gene transcription"/>
</dbReference>
<dbReference type="Reactome" id="R-HSA-9022692">
    <property type="pathway name" value="Regulation of MECP2 expression and activity"/>
</dbReference>
<dbReference type="Reactome" id="R-HSA-9022699">
    <property type="pathway name" value="MECP2 regulates neuronal receptors and channels"/>
</dbReference>
<dbReference type="Reactome" id="R-HSA-9615017">
    <property type="pathway name" value="FOXO-mediated transcription of oxidative stress, metabolic and neuronal genes"/>
</dbReference>
<dbReference type="Reactome" id="R-HSA-9619665">
    <property type="pathway name" value="EGR2 and SOX10-mediated initiation of Schwann cell myelination"/>
</dbReference>
<dbReference type="Reactome" id="R-HSA-9679191">
    <property type="pathway name" value="Potential therapeutics for SARS"/>
</dbReference>
<dbReference type="Reactome" id="R-HSA-9701898">
    <property type="pathway name" value="STAT3 nuclear events downstream of ALK signaling"/>
</dbReference>
<dbReference type="Reactome" id="R-HSA-983231">
    <property type="pathway name" value="Factors involved in megakaryocyte development and platelet production"/>
</dbReference>
<dbReference type="Reactome" id="R-HSA-9843940">
    <property type="pathway name" value="Regulation of endogenous retroelements by KRAB-ZFP proteins"/>
</dbReference>
<dbReference type="Reactome" id="R-HSA-9844594">
    <property type="pathway name" value="Transcriptional regulation of brown and beige adipocyte differentiation by EBF2"/>
</dbReference>
<dbReference type="Reactome" id="R-HSA-9845323">
    <property type="pathway name" value="Regulation of endogenous retroelements by Piwi-interacting RNAs (piRNAs)"/>
</dbReference>
<dbReference type="SABIO-RK" id="Q92769"/>
<dbReference type="SignaLink" id="Q92769"/>
<dbReference type="SIGNOR" id="Q92769"/>
<dbReference type="BioGRID-ORCS" id="3066">
    <property type="hits" value="43 hits in 1195 CRISPR screens"/>
</dbReference>
<dbReference type="CD-CODE" id="91857CE7">
    <property type="entry name" value="Nucleolus"/>
</dbReference>
<dbReference type="ChiTaRS" id="HDAC2">
    <property type="organism name" value="human"/>
</dbReference>
<dbReference type="EvolutionaryTrace" id="Q92769"/>
<dbReference type="GeneWiki" id="Histone_deacetylase_2"/>
<dbReference type="GenomeRNAi" id="3066"/>
<dbReference type="Pharos" id="Q92769">
    <property type="development level" value="Tclin"/>
</dbReference>
<dbReference type="PRO" id="PR:Q92769"/>
<dbReference type="Proteomes" id="UP000005640">
    <property type="component" value="Chromosome 6"/>
</dbReference>
<dbReference type="RNAct" id="Q92769">
    <property type="molecule type" value="protein"/>
</dbReference>
<dbReference type="Bgee" id="ENSG00000196591">
    <property type="expression patterns" value="Expressed in ganglionic eminence and 207 other cell types or tissues"/>
</dbReference>
<dbReference type="ExpressionAtlas" id="Q92769">
    <property type="expression patterns" value="baseline and differential"/>
</dbReference>
<dbReference type="GO" id="GO:0000785">
    <property type="term" value="C:chromatin"/>
    <property type="evidence" value="ECO:0007005"/>
    <property type="project" value="UniProtKB"/>
</dbReference>
<dbReference type="GO" id="GO:0000781">
    <property type="term" value="C:chromosome, telomeric region"/>
    <property type="evidence" value="ECO:0000314"/>
    <property type="project" value="UniProtKB"/>
</dbReference>
<dbReference type="GO" id="GO:0005737">
    <property type="term" value="C:cytoplasm"/>
    <property type="evidence" value="ECO:0000314"/>
    <property type="project" value="UniProtKB"/>
</dbReference>
<dbReference type="GO" id="GO:0035098">
    <property type="term" value="C:ESC/E(Z) complex"/>
    <property type="evidence" value="ECO:0000314"/>
    <property type="project" value="UniProtKB"/>
</dbReference>
<dbReference type="GO" id="GO:0000118">
    <property type="term" value="C:histone deacetylase complex"/>
    <property type="evidence" value="ECO:0000314"/>
    <property type="project" value="UniProtKB"/>
</dbReference>
<dbReference type="GO" id="GO:0005654">
    <property type="term" value="C:nucleoplasm"/>
    <property type="evidence" value="ECO:0000314"/>
    <property type="project" value="HPA"/>
</dbReference>
<dbReference type="GO" id="GO:0005634">
    <property type="term" value="C:nucleus"/>
    <property type="evidence" value="ECO:0000314"/>
    <property type="project" value="UniProtKB"/>
</dbReference>
<dbReference type="GO" id="GO:0016581">
    <property type="term" value="C:NuRD complex"/>
    <property type="evidence" value="ECO:0000314"/>
    <property type="project" value="UniProtKB"/>
</dbReference>
<dbReference type="GO" id="GO:0032991">
    <property type="term" value="C:protein-containing complex"/>
    <property type="evidence" value="ECO:0000314"/>
    <property type="project" value="UniProtKB"/>
</dbReference>
<dbReference type="GO" id="GO:0070822">
    <property type="term" value="C:Sin3-type complex"/>
    <property type="evidence" value="ECO:0000314"/>
    <property type="project" value="UniProtKB"/>
</dbReference>
<dbReference type="GO" id="GO:0003682">
    <property type="term" value="F:chromatin binding"/>
    <property type="evidence" value="ECO:0000250"/>
    <property type="project" value="UniProtKB"/>
</dbReference>
<dbReference type="GO" id="GO:0019899">
    <property type="term" value="F:enzyme binding"/>
    <property type="evidence" value="ECO:0000353"/>
    <property type="project" value="UniProtKB"/>
</dbReference>
<dbReference type="GO" id="GO:0031072">
    <property type="term" value="F:heat shock protein binding"/>
    <property type="evidence" value="ECO:0007669"/>
    <property type="project" value="Ensembl"/>
</dbReference>
<dbReference type="GO" id="GO:0042393">
    <property type="term" value="F:histone binding"/>
    <property type="evidence" value="ECO:0000314"/>
    <property type="project" value="BHF-UCL"/>
</dbReference>
<dbReference type="GO" id="GO:0004407">
    <property type="term" value="F:histone deacetylase activity"/>
    <property type="evidence" value="ECO:0000314"/>
    <property type="project" value="UniProtKB"/>
</dbReference>
<dbReference type="GO" id="GO:0141221">
    <property type="term" value="F:histone deacetylase activity, hydrolytic mechanism"/>
    <property type="evidence" value="ECO:0007669"/>
    <property type="project" value="UniProtKB-EC"/>
</dbReference>
<dbReference type="GO" id="GO:0042826">
    <property type="term" value="F:histone deacetylase binding"/>
    <property type="evidence" value="ECO:0000353"/>
    <property type="project" value="UniProtKB"/>
</dbReference>
<dbReference type="GO" id="GO:0160009">
    <property type="term" value="F:histone decrotonylase activity"/>
    <property type="evidence" value="ECO:0000314"/>
    <property type="project" value="UniProtKB"/>
</dbReference>
<dbReference type="GO" id="GO:0051059">
    <property type="term" value="F:NF-kappaB binding"/>
    <property type="evidence" value="ECO:0000353"/>
    <property type="project" value="UniProtKB"/>
</dbReference>
<dbReference type="GO" id="GO:1990841">
    <property type="term" value="F:promoter-specific chromatin binding"/>
    <property type="evidence" value="ECO:0007669"/>
    <property type="project" value="Ensembl"/>
</dbReference>
<dbReference type="GO" id="GO:0160010">
    <property type="term" value="F:protein de-2-hydroxyisobutyrylase activity"/>
    <property type="evidence" value="ECO:0000314"/>
    <property type="project" value="UniProtKB"/>
</dbReference>
<dbReference type="GO" id="GO:0033558">
    <property type="term" value="F:protein lysine deacetylase activity"/>
    <property type="evidence" value="ECO:0000315"/>
    <property type="project" value="BHF-UCL"/>
</dbReference>
<dbReference type="GO" id="GO:0160216">
    <property type="term" value="F:protein lysine delactylase activity"/>
    <property type="evidence" value="ECO:0000314"/>
    <property type="project" value="UniProtKB"/>
</dbReference>
<dbReference type="GO" id="GO:0003723">
    <property type="term" value="F:RNA binding"/>
    <property type="evidence" value="ECO:0007005"/>
    <property type="project" value="UniProtKB"/>
</dbReference>
<dbReference type="GO" id="GO:0061629">
    <property type="term" value="F:RNA polymerase II-specific DNA-binding transcription factor binding"/>
    <property type="evidence" value="ECO:0000353"/>
    <property type="project" value="BHF-UCL"/>
</dbReference>
<dbReference type="GO" id="GO:0001221">
    <property type="term" value="F:transcription coregulator binding"/>
    <property type="evidence" value="ECO:0000353"/>
    <property type="project" value="BHF-UCL"/>
</dbReference>
<dbReference type="GO" id="GO:0048149">
    <property type="term" value="P:behavioral response to ethanol"/>
    <property type="evidence" value="ECO:0007669"/>
    <property type="project" value="Ensembl"/>
</dbReference>
<dbReference type="GO" id="GO:0003300">
    <property type="term" value="P:cardiac muscle hypertrophy"/>
    <property type="evidence" value="ECO:0007669"/>
    <property type="project" value="Ensembl"/>
</dbReference>
<dbReference type="GO" id="GO:1903351">
    <property type="term" value="P:cellular response to dopamine"/>
    <property type="evidence" value="ECO:0007669"/>
    <property type="project" value="Ensembl"/>
</dbReference>
<dbReference type="GO" id="GO:0034605">
    <property type="term" value="P:cellular response to heat"/>
    <property type="evidence" value="ECO:0007669"/>
    <property type="project" value="Ensembl"/>
</dbReference>
<dbReference type="GO" id="GO:0070301">
    <property type="term" value="P:cellular response to hydrogen peroxide"/>
    <property type="evidence" value="ECO:0007669"/>
    <property type="project" value="Ensembl"/>
</dbReference>
<dbReference type="GO" id="GO:0071300">
    <property type="term" value="P:cellular response to retinoic acid"/>
    <property type="evidence" value="ECO:0007669"/>
    <property type="project" value="Ensembl"/>
</dbReference>
<dbReference type="GO" id="GO:0071560">
    <property type="term" value="P:cellular response to transforming growth factor beta stimulus"/>
    <property type="evidence" value="ECO:0007669"/>
    <property type="project" value="Ensembl"/>
</dbReference>
<dbReference type="GO" id="GO:0006338">
    <property type="term" value="P:chromatin remodeling"/>
    <property type="evidence" value="ECO:0000314"/>
    <property type="project" value="ComplexPortal"/>
</dbReference>
<dbReference type="GO" id="GO:0032922">
    <property type="term" value="P:circadian regulation of gene expression"/>
    <property type="evidence" value="ECO:0000250"/>
    <property type="project" value="UniProtKB"/>
</dbReference>
<dbReference type="GO" id="GO:0016358">
    <property type="term" value="P:dendrite development"/>
    <property type="evidence" value="ECO:0000250"/>
    <property type="project" value="UniProtKB"/>
</dbReference>
<dbReference type="GO" id="GO:0042733">
    <property type="term" value="P:embryonic digit morphogenesis"/>
    <property type="evidence" value="ECO:0000250"/>
    <property type="project" value="BHF-UCL"/>
</dbReference>
<dbReference type="GO" id="GO:0009913">
    <property type="term" value="P:epidermal cell differentiation"/>
    <property type="evidence" value="ECO:0000250"/>
    <property type="project" value="BHF-UCL"/>
</dbReference>
<dbReference type="GO" id="GO:0061029">
    <property type="term" value="P:eyelid development in camera-type eye"/>
    <property type="evidence" value="ECO:0000250"/>
    <property type="project" value="BHF-UCL"/>
</dbReference>
<dbReference type="GO" id="GO:0061198">
    <property type="term" value="P:fungiform papilla formation"/>
    <property type="evidence" value="ECO:0000250"/>
    <property type="project" value="BHF-UCL"/>
</dbReference>
<dbReference type="GO" id="GO:0060789">
    <property type="term" value="P:hair follicle placode formation"/>
    <property type="evidence" value="ECO:0000250"/>
    <property type="project" value="BHF-UCL"/>
</dbReference>
<dbReference type="GO" id="GO:0031507">
    <property type="term" value="P:heterochromatin formation"/>
    <property type="evidence" value="ECO:0000315"/>
    <property type="project" value="BHF-UCL"/>
</dbReference>
<dbReference type="GO" id="GO:0043066">
    <property type="term" value="P:negative regulation of apoptotic process"/>
    <property type="evidence" value="ECO:0000250"/>
    <property type="project" value="BHF-UCL"/>
</dbReference>
<dbReference type="GO" id="GO:0030336">
    <property type="term" value="P:negative regulation of cell migration"/>
    <property type="evidence" value="ECO:0000303"/>
    <property type="project" value="ComplexPortal"/>
</dbReference>
<dbReference type="GO" id="GO:0061000">
    <property type="term" value="P:negative regulation of dendritic spine development"/>
    <property type="evidence" value="ECO:0007669"/>
    <property type="project" value="Ensembl"/>
</dbReference>
<dbReference type="GO" id="GO:0045892">
    <property type="term" value="P:negative regulation of DNA-templated transcription"/>
    <property type="evidence" value="ECO:0000303"/>
    <property type="project" value="ComplexPortal"/>
</dbReference>
<dbReference type="GO" id="GO:0010977">
    <property type="term" value="P:negative regulation of neuron projection development"/>
    <property type="evidence" value="ECO:0000250"/>
    <property type="project" value="BHF-UCL"/>
</dbReference>
<dbReference type="GO" id="GO:1902455">
    <property type="term" value="P:negative regulation of stem cell population maintenance"/>
    <property type="evidence" value="ECO:0000303"/>
    <property type="project" value="ComplexPortal"/>
</dbReference>
<dbReference type="GO" id="GO:0010944">
    <property type="term" value="P:negative regulation of transcription by competitive promoter binding"/>
    <property type="evidence" value="ECO:0000315"/>
    <property type="project" value="BHF-UCL"/>
</dbReference>
<dbReference type="GO" id="GO:0000122">
    <property type="term" value="P:negative regulation of transcription by RNA polymerase II"/>
    <property type="evidence" value="ECO:0000315"/>
    <property type="project" value="BHF-UCL"/>
</dbReference>
<dbReference type="GO" id="GO:0030512">
    <property type="term" value="P:negative regulation of transforming growth factor beta receptor signaling pathway"/>
    <property type="evidence" value="ECO:0000303"/>
    <property type="project" value="ComplexPortal"/>
</dbReference>
<dbReference type="GO" id="GO:0042475">
    <property type="term" value="P:odontogenesis of dentin-containing tooth"/>
    <property type="evidence" value="ECO:0000250"/>
    <property type="project" value="BHF-UCL"/>
</dbReference>
<dbReference type="GO" id="GO:0008284">
    <property type="term" value="P:positive regulation of cell population proliferation"/>
    <property type="evidence" value="ECO:0000315"/>
    <property type="project" value="BHF-UCL"/>
</dbReference>
<dbReference type="GO" id="GO:0045893">
    <property type="term" value="P:positive regulation of DNA-templated transcription"/>
    <property type="evidence" value="ECO:0000303"/>
    <property type="project" value="ComplexPortal"/>
</dbReference>
<dbReference type="GO" id="GO:0010718">
    <property type="term" value="P:positive regulation of epithelial to mesenchymal transition"/>
    <property type="evidence" value="ECO:0007669"/>
    <property type="project" value="Ensembl"/>
</dbReference>
<dbReference type="GO" id="GO:0032732">
    <property type="term" value="P:positive regulation of interleukin-1 production"/>
    <property type="evidence" value="ECO:0007669"/>
    <property type="project" value="Ensembl"/>
</dbReference>
<dbReference type="GO" id="GO:0033148">
    <property type="term" value="P:positive regulation of intracellular estrogen receptor signaling pathway"/>
    <property type="evidence" value="ECO:0000315"/>
    <property type="project" value="BHF-UCL"/>
</dbReference>
<dbReference type="GO" id="GO:1902437">
    <property type="term" value="P:positive regulation of male mating behavior"/>
    <property type="evidence" value="ECO:0007669"/>
    <property type="project" value="Ensembl"/>
</dbReference>
<dbReference type="GO" id="GO:0048714">
    <property type="term" value="P:positive regulation of oligodendrocyte differentiation"/>
    <property type="evidence" value="ECO:0007669"/>
    <property type="project" value="Ensembl"/>
</dbReference>
<dbReference type="GO" id="GO:0045862">
    <property type="term" value="P:positive regulation of proteolysis"/>
    <property type="evidence" value="ECO:0000315"/>
    <property type="project" value="BHF-UCL"/>
</dbReference>
<dbReference type="GO" id="GO:1902459">
    <property type="term" value="P:positive regulation of stem cell population maintenance"/>
    <property type="evidence" value="ECO:0000303"/>
    <property type="project" value="ComplexPortal"/>
</dbReference>
<dbReference type="GO" id="GO:0045944">
    <property type="term" value="P:positive regulation of transcription by RNA polymerase II"/>
    <property type="evidence" value="ECO:0000315"/>
    <property type="project" value="BHF-UCL"/>
</dbReference>
<dbReference type="GO" id="GO:0032760">
    <property type="term" value="P:positive regulation of tumor necrosis factor production"/>
    <property type="evidence" value="ECO:0007669"/>
    <property type="project" value="Ensembl"/>
</dbReference>
<dbReference type="GO" id="GO:0050847">
    <property type="term" value="P:progesterone receptor signaling pathway"/>
    <property type="evidence" value="ECO:0000315"/>
    <property type="project" value="BHF-UCL"/>
</dbReference>
<dbReference type="GO" id="GO:0036211">
    <property type="term" value="P:protein modification process"/>
    <property type="evidence" value="ECO:0007669"/>
    <property type="project" value="Ensembl"/>
</dbReference>
<dbReference type="GO" id="GO:0042659">
    <property type="term" value="P:regulation of cell fate specification"/>
    <property type="evidence" value="ECO:0000303"/>
    <property type="project" value="ComplexPortal"/>
</dbReference>
<dbReference type="GO" id="GO:2000736">
    <property type="term" value="P:regulation of stem cell differentiation"/>
    <property type="evidence" value="ECO:0000303"/>
    <property type="project" value="ComplexPortal"/>
</dbReference>
<dbReference type="GO" id="GO:0001975">
    <property type="term" value="P:response to amphetamine"/>
    <property type="evidence" value="ECO:0007669"/>
    <property type="project" value="Ensembl"/>
</dbReference>
<dbReference type="GO" id="GO:1904645">
    <property type="term" value="P:response to amyloid-beta"/>
    <property type="evidence" value="ECO:0007669"/>
    <property type="project" value="Ensembl"/>
</dbReference>
<dbReference type="GO" id="GO:0031000">
    <property type="term" value="P:response to caffeine"/>
    <property type="evidence" value="ECO:0007669"/>
    <property type="project" value="Ensembl"/>
</dbReference>
<dbReference type="GO" id="GO:0042220">
    <property type="term" value="P:response to cocaine"/>
    <property type="evidence" value="ECO:0007669"/>
    <property type="project" value="Ensembl"/>
</dbReference>
<dbReference type="GO" id="GO:0055093">
    <property type="term" value="P:response to hyperoxia"/>
    <property type="evidence" value="ECO:0007669"/>
    <property type="project" value="Ensembl"/>
</dbReference>
<dbReference type="GO" id="GO:0032496">
    <property type="term" value="P:response to lipopolysaccharide"/>
    <property type="evidence" value="ECO:0007669"/>
    <property type="project" value="Ensembl"/>
</dbReference>
<dbReference type="GO" id="GO:0035094">
    <property type="term" value="P:response to nicotine"/>
    <property type="evidence" value="ECO:0007669"/>
    <property type="project" value="Ensembl"/>
</dbReference>
<dbReference type="GO" id="GO:0009410">
    <property type="term" value="P:response to xenobiotic stimulus"/>
    <property type="evidence" value="ECO:0007669"/>
    <property type="project" value="Ensembl"/>
</dbReference>
<dbReference type="CDD" id="cd10011">
    <property type="entry name" value="HDAC2"/>
    <property type="match status" value="1"/>
</dbReference>
<dbReference type="FunFam" id="3.40.800.20:FF:000003">
    <property type="entry name" value="Histone deacetylase"/>
    <property type="match status" value="1"/>
</dbReference>
<dbReference type="Gene3D" id="3.40.800.20">
    <property type="entry name" value="Histone deacetylase domain"/>
    <property type="match status" value="1"/>
</dbReference>
<dbReference type="IDEAL" id="IID00488"/>
<dbReference type="InterPro" id="IPR050284">
    <property type="entry name" value="HDAC_PDAC"/>
</dbReference>
<dbReference type="InterPro" id="IPR000286">
    <property type="entry name" value="His_deacetylse"/>
</dbReference>
<dbReference type="InterPro" id="IPR003084">
    <property type="entry name" value="His_deacetylse_1"/>
</dbReference>
<dbReference type="InterPro" id="IPR023801">
    <property type="entry name" value="His_deacetylse_dom"/>
</dbReference>
<dbReference type="InterPro" id="IPR037138">
    <property type="entry name" value="His_deacetylse_dom_sf"/>
</dbReference>
<dbReference type="InterPro" id="IPR023696">
    <property type="entry name" value="Ureohydrolase_dom_sf"/>
</dbReference>
<dbReference type="PANTHER" id="PTHR10625:SF3">
    <property type="entry name" value="HISTONE DEACETYLASE 2"/>
    <property type="match status" value="1"/>
</dbReference>
<dbReference type="PANTHER" id="PTHR10625">
    <property type="entry name" value="HISTONE DEACETYLASE HDAC1-RELATED"/>
    <property type="match status" value="1"/>
</dbReference>
<dbReference type="Pfam" id="PF00850">
    <property type="entry name" value="Hist_deacetyl"/>
    <property type="match status" value="1"/>
</dbReference>
<dbReference type="PIRSF" id="PIRSF037913">
    <property type="entry name" value="His_deacetylse_1"/>
    <property type="match status" value="1"/>
</dbReference>
<dbReference type="PRINTS" id="PR01270">
    <property type="entry name" value="HDASUPER"/>
</dbReference>
<dbReference type="PRINTS" id="PR01271">
    <property type="entry name" value="HISDACETLASE"/>
</dbReference>
<dbReference type="SUPFAM" id="SSF52768">
    <property type="entry name" value="Arginase/deacetylase"/>
    <property type="match status" value="1"/>
</dbReference>
<proteinExistence type="evidence at protein level"/>
<accession>Q92769</accession>
<accession>B3KRS5</accession>
<accession>B4DL58</accession>
<accession>E1P561</accession>
<accession>Q5SRI8</accession>
<accession>Q5SZ86</accession>
<accession>Q8NEH4</accession>